<comment type="function">
    <text evidence="1 18 21 26 28 30 31 32 33 34 35 36 37 38 39 40 41">Thiol protease that plays a key role in programmed cell death by acting as a molecular switch for apoptosis, necroptosis and pyroptosis, and is required to prevent tissue damage during embryonic development and adulthood (PubMed:23516580, PubMed:35338844, PubMed:35446120, PubMed:8681376, PubMed:8681377, PubMed:8962078, PubMed:9006941, PubMed:9184224). Initiator protease that induces extrinsic apoptosis by mediating cleavage and activation of effector caspases responsible for FAS/CD95-mediated and TNFRSF1A-induced cell death (PubMed:23516580, PubMed:35338844, PubMed:35446120, PubMed:8681376, PubMed:8681377, PubMed:8962078, PubMed:9006941, PubMed:9184224). Cleaves and activates effector caspases CASP3, CASP4, CASP6, CASP7, CASP9 and CASP10 (PubMed:16916640, PubMed:8962078, PubMed:9006941). Binding to the adapter molecule FADD recruits it to either receptor FAS/TNFRSF6 or TNFRSF1A (PubMed:8681376, PubMed:8681377). The resulting aggregate called the death-inducing signaling complex (DISC) performs CASP8 proteolytic activation (PubMed:9184224). The active dimeric enzyme is then liberated from the DISC and free to activate downstream apoptotic proteases (PubMed:9184224). Proteolytic fragments of the N-terminal propeptide (termed CAP3, CAP5 and CAP6) are likely retained in the DISC (PubMed:9184224). In addition to extrinsic apoptosis, also acts as a negative regulator of necroptosis: acts by cleaving RIPK1 at 'Asp-324', which is crucial to inhibit RIPK1 kinase activity, limiting TNF-induced apoptosis, necroptosis and inflammatory response (PubMed:31827280, PubMed:31827281). Also able to initiate pyroptosis by mediating cleavage and activation of gasdermin-C and -D (GSDMC and GSDMD, respectively): gasdermin cleavage promotes release of the N-terminal moiety that binds to membranes and forms pores, triggering pyroptosis (PubMed:32929201, PubMed:34012073). Initiates pyroptosis following inactivation of MAP3K7/TAK1 (By similarity). Also acts as a regulator of innate immunity by mediating cleavage and inactivation of N4BP1 downstream of TLR3 or TLR4, thereby promoting cytokine production (By similarity). May participate in the Granzyme B (GZMB) cell death pathways (PubMed:8755496). Cleaves PARP1 and PARP2 (PubMed:8681376). Independent of its protease activity, promotes cell migration following phosphorylation at Tyr-380 (PubMed:18216014, PubMed:27109099).</text>
</comment>
<comment type="function">
    <molecule>Isoform 5</molecule>
    <text evidence="55">Lacks the catalytic site and may interfere with the pro-apoptotic activity of the complex.</text>
</comment>
<comment type="function">
    <molecule>Isoform 6</molecule>
    <text evidence="55">Lacks the catalytic site and may interfere with the pro-apoptotic activity of the complex.</text>
</comment>
<comment type="function">
    <molecule>Isoform 7</molecule>
    <text evidence="10 55">Lacks the catalytic site and may interfere with the pro-apoptotic activity of the complex (Probable). Acts as an inhibitor of the caspase cascade (PubMed:12010809).</text>
</comment>
<comment type="function">
    <molecule>Isoform 8</molecule>
    <text evidence="55">Lacks the catalytic site and may interfere with the pro-apoptotic activity of the complex.</text>
</comment>
<comment type="catalytic activity">
    <reaction evidence="18 26 32 33 39">
        <text>Strict requirement for Asp at position P1 and has a preferred cleavage sequence of (Leu/Asp/Val)-Glu-Thr-Asp-|-(Gly/Ser/Ala).</text>
        <dbReference type="EC" id="3.4.22.61"/>
    </reaction>
</comment>
<comment type="activity regulation">
    <text evidence="1 26">CASP8 activity is restricted by RIPK1 (By similarity). Inhibited by the effector protein NleF that is produced by pathogenic E.coli; this inhibits apoptosis (PubMed:23516580).</text>
</comment>
<comment type="subunit">
    <text evidence="1 2 4 5 12 13 16 23 28 29 36 37 41">Heterotetramer that consists of two anti-parallel arranged heterodimers, each one formed by a 18 kDa (p18) and a 10 kDa (p10) subunit (PubMed:10508784). Component of the death-induced signaling complex (DISC) composed of cell surface receptor FAS/CD95 or TNFRSF1A, adapter protein FADD and the CASP8 protease; recruitment of CASP8 to the complex is required for processing of CASP8 into the p18 and p10 subunits (PubMed:8681376, PubMed:8681377, PubMed:9184224). Component of the AIM2 PANoptosome complex, a multiprotein complex that drives inflammatory cell death (PANoptosis) (By similarity). Interacts with CFLAR and PEA15 (PubMed:10442631). Interacts with TNFAIP8L2 (By similarity). Interacts with CASP8AP2 (PubMed:16378960). Interacts with RFFL and RNF34; negatively regulate CASP8 through proteasomal degradation (PubMed:15069192). Interacts with NOL3; decreases CASP8 activity in a mitochondria localization- and phosphorylation-dependent manner and this interaction is dissociated by calcium (PubMed:15509781). Interacts with UBR2ca (PubMed:28602583). Interacts with RIPK1 (By similarity). Interacts with stimulated TNFRSF10B; this interaction is followed by CASP8 proteolytic cleavage and activation (PubMed:18846110). Interacts (phosphorylated on Tyr-380) with PIK3R1 (PubMed:27109099).</text>
</comment>
<comment type="subunit">
    <molecule>Isoform 9</molecule>
    <text evidence="9 43">Interacts at the endoplasmic reticulum with a complex containing BCAP31, BAP29, BCL2 and/or BCL2L1.</text>
</comment>
<comment type="subunit">
    <text evidence="8">(Microbial infection) Interacts with human cytomegalovirus/HHV-5 protein vICA/UL36; this interaction inhibits CASP8 activation.</text>
</comment>
<comment type="subunit">
    <text evidence="26">(Microbial infection) Interacts with NleF from pathogenic E.coli.</text>
</comment>
<comment type="subunit">
    <text evidence="16">(Microbial infection) Interacts with molluscum contagiosum virus protein MC160.</text>
</comment>
<comment type="subunit">
    <text evidence="27">(Microbial infection) Interacts (via RIP homotypic interaction motif) with herpes simplex virus 1/HHV-1 protein RIR1/ICP6 (via RIP homotypic interaction motif); this interaction prevents necroptosis activation.</text>
</comment>
<comment type="subunit">
    <text evidence="27">(Microbial infection) Interacts (via RIP homotypic interaction motif) with herpes simplex virus 2/HHV-2 protein RIR1/ICP10 (via RIP homotypic interaction motif); this interaction prevents necroptosis activation.</text>
</comment>
<comment type="interaction">
    <interactant intactId="EBI-78060">
        <id>Q14790</id>
    </interactant>
    <interactant intactId="EBI-77613">
        <id>P05067</id>
        <label>APP</label>
    </interactant>
    <organismsDiffer>false</organismsDiffer>
    <experiments>3</experiments>
</comment>
<comment type="interaction">
    <interactant intactId="EBI-78060">
        <id>Q14790</id>
    </interactant>
    <interactant intactId="EBI-608057">
        <id>P10275</id>
        <label>AR</label>
    </interactant>
    <organismsDiffer>false</organismsDiffer>
    <experiments>3</experiments>
</comment>
<comment type="interaction">
    <interactant intactId="EBI-78060">
        <id>Q14790</id>
    </interactant>
    <interactant intactId="EBI-77683">
        <id>P51572</id>
        <label>BCAP31</label>
    </interactant>
    <organismsDiffer>false</organismsDiffer>
    <experiments>3</experiments>
</comment>
<comment type="interaction">
    <interactant intactId="EBI-78060">
        <id>Q14790</id>
    </interactant>
    <interactant intactId="EBI-495095">
        <id>Q92851</id>
        <label>CASP10</label>
    </interactant>
    <organismsDiffer>false</organismsDiffer>
    <experiments>3</experiments>
</comment>
<comment type="interaction">
    <interactant intactId="EBI-78060">
        <id>Q14790</id>
    </interactant>
    <interactant intactId="EBI-78060">
        <id>Q14790</id>
        <label>CASP8</label>
    </interactant>
    <organismsDiffer>false</organismsDiffer>
    <experiments>2</experiments>
</comment>
<comment type="interaction">
    <interactant intactId="EBI-78060">
        <id>Q14790</id>
    </interactant>
    <interactant intactId="EBI-2339650">
        <id>Q9UKL3</id>
        <label>CASP8AP2</label>
    </interactant>
    <organismsDiffer>false</organismsDiffer>
    <experiments>3</experiments>
</comment>
<comment type="interaction">
    <interactant intactId="EBI-78060">
        <id>Q14790</id>
    </interactant>
    <interactant intactId="EBI-514941">
        <id>O15519</id>
        <label>CFLAR</label>
    </interactant>
    <organismsDiffer>false</organismsDiffer>
    <experiments>10</experiments>
</comment>
<comment type="interaction">
    <interactant intactId="EBI-78060">
        <id>Q14790</id>
    </interactant>
    <interactant intactId="EBI-4567563">
        <id>O15519-1</id>
        <label>CFLAR</label>
    </interactant>
    <organismsDiffer>false</organismsDiffer>
    <experiments>2</experiments>
</comment>
<comment type="interaction">
    <interactant intactId="EBI-78060">
        <id>Q14790</id>
    </interactant>
    <interactant intactId="EBI-456129">
        <id>Q13618</id>
        <label>CUL3</label>
    </interactant>
    <organismsDiffer>false</organismsDiffer>
    <experiments>6</experiments>
</comment>
<comment type="interaction">
    <interactant intactId="EBI-78060">
        <id>Q14790</id>
    </interactant>
    <interactant intactId="EBI-494804">
        <id>Q13158</id>
        <label>FADD</label>
    </interactant>
    <organismsDiffer>false</organismsDiffer>
    <experiments>46</experiments>
</comment>
<comment type="interaction">
    <interactant intactId="EBI-78060">
        <id>Q14790</id>
    </interactant>
    <interactant intactId="EBI-494743">
        <id>P25445</id>
        <label>FAS</label>
    </interactant>
    <organismsDiffer>false</organismsDiffer>
    <experiments>15</experiments>
</comment>
<comment type="interaction">
    <interactant intactId="EBI-78060">
        <id>Q14790</id>
    </interactant>
    <interactant intactId="EBI-15749113">
        <id>P25445-1</id>
        <label>FAS</label>
    </interactant>
    <organismsDiffer>false</organismsDiffer>
    <experiments>3</experiments>
</comment>
<comment type="interaction">
    <interactant intactId="EBI-78060">
        <id>Q14790</id>
    </interactant>
    <interactant intactId="EBI-495538">
        <id>P48023</id>
        <label>FASLG</label>
    </interactant>
    <organismsDiffer>false</organismsDiffer>
    <experiments>5</experiments>
</comment>
<comment type="interaction">
    <interactant intactId="EBI-78060">
        <id>Q14790</id>
    </interactant>
    <interactant intactId="EBI-25856644">
        <id>Q06787-7</id>
        <label>FMR1</label>
    </interactant>
    <organismsDiffer>false</organismsDiffer>
    <experiments>3</experiments>
</comment>
<comment type="interaction">
    <interactant intactId="EBI-78060">
        <id>Q14790</id>
    </interactant>
    <interactant intactId="EBI-747644">
        <id>Q13418</id>
        <label>ILK</label>
    </interactant>
    <organismsDiffer>false</organismsDiffer>
    <experiments>2</experiments>
</comment>
<comment type="interaction">
    <interactant intactId="EBI-78060">
        <id>Q14790</id>
    </interactant>
    <interactant intactId="EBI-1047372">
        <id>Q9UDY8</id>
        <label>MALT1</label>
    </interactant>
    <organismsDiffer>false</organismsDiffer>
    <experiments>10</experiments>
</comment>
<comment type="interaction">
    <interactant intactId="EBI-78060">
        <id>Q14790</id>
    </interactant>
    <interactant intactId="EBI-740992">
        <id>O60936</id>
        <label>NOL3</label>
    </interactant>
    <organismsDiffer>false</organismsDiffer>
    <experiments>3</experiments>
</comment>
<comment type="interaction">
    <interactant intactId="EBI-78060">
        <id>Q14790</id>
    </interactant>
    <interactant intactId="EBI-476768">
        <id>P53350</id>
        <label>PLK1</label>
    </interactant>
    <organismsDiffer>false</organismsDiffer>
    <experiments>3</experiments>
</comment>
<comment type="interaction">
    <interactant intactId="EBI-78060">
        <id>Q14790</id>
    </interactant>
    <interactant intactId="EBI-78260">
        <id>P29350</id>
        <label>PTPN6</label>
    </interactant>
    <organismsDiffer>false</organismsDiffer>
    <experiments>3</experiments>
</comment>
<comment type="interaction">
    <interactant intactId="EBI-78060">
        <id>Q14790</id>
    </interactant>
    <interactant intactId="EBI-365996">
        <id>P04049</id>
        <label>RAF1</label>
    </interactant>
    <organismsDiffer>false</organismsDiffer>
    <experiments>3</experiments>
</comment>
<comment type="interaction">
    <interactant intactId="EBI-78060">
        <id>Q14790</id>
    </interactant>
    <interactant intactId="EBI-358507">
        <id>Q13546</id>
        <label>RIPK1</label>
    </interactant>
    <organismsDiffer>false</organismsDiffer>
    <experiments>28</experiments>
</comment>
<comment type="interaction">
    <interactant intactId="EBI-78060">
        <id>Q14790</id>
    </interactant>
    <interactant intactId="EBI-2340642">
        <id>Q969K3</id>
        <label>RNF34</label>
    </interactant>
    <organismsDiffer>false</organismsDiffer>
    <experiments>3</experiments>
</comment>
<comment type="interaction">
    <interactant intactId="EBI-78060">
        <id>Q14790</id>
    </interactant>
    <interactant intactId="EBI-527670">
        <id>P21580</id>
        <label>TNFAIP3</label>
    </interactant>
    <organismsDiffer>false</organismsDiffer>
    <experiments>3</experiments>
</comment>
<comment type="interaction">
    <interactant intactId="EBI-78060">
        <id>Q14790</id>
    </interactant>
    <interactant intactId="EBI-518861">
        <id>O00220</id>
        <label>TNFRSF10A</label>
    </interactant>
    <organismsDiffer>false</organismsDiffer>
    <experiments>11</experiments>
</comment>
<comment type="interaction">
    <interactant intactId="EBI-78060">
        <id>Q14790</id>
    </interactant>
    <interactant intactId="EBI-25834258">
        <id>P13051-2</id>
        <label>UNG</label>
    </interactant>
    <organismsDiffer>false</organismsDiffer>
    <experiments>3</experiments>
</comment>
<comment type="interaction">
    <interactant intactId="EBI-78060">
        <id>Q14790</id>
    </interactant>
    <interactant intactId="EBI-2527283">
        <id>Q96AX1</id>
        <label>VPS33A</label>
    </interactant>
    <organismsDiffer>false</organismsDiffer>
    <experiments>3</experiments>
</comment>
<comment type="interaction">
    <interactant intactId="EBI-288309">
        <id>Q14790-1</id>
    </interactant>
    <interactant intactId="EBI-494804">
        <id>Q13158</id>
        <label>FADD</label>
    </interactant>
    <organismsDiffer>false</organismsDiffer>
    <experiments>5</experiments>
</comment>
<comment type="interaction">
    <interactant intactId="EBI-15777741">
        <id>Q14790-2</id>
    </interactant>
    <interactant intactId="EBI-4567563">
        <id>O15519-1</id>
        <label>CFLAR</label>
    </interactant>
    <organismsDiffer>false</organismsDiffer>
    <experiments>3</experiments>
</comment>
<comment type="interaction">
    <interactant intactId="EBI-288326">
        <id>Q14790-5</id>
    </interactant>
    <interactant intactId="EBI-494804">
        <id>Q13158</id>
        <label>FADD</label>
    </interactant>
    <organismsDiffer>false</organismsDiffer>
    <experiments>4</experiments>
</comment>
<comment type="interaction">
    <interactant intactId="EBI-4478080">
        <id>PRO_0000004629</id>
    </interactant>
    <interactant intactId="EBI-12736099">
        <id>PRO_0000004631</id>
        <label>CASP8</label>
        <dbReference type="UniProtKB" id="Q14790"/>
    </interactant>
    <organismsDiffer>false</organismsDiffer>
    <experiments>2</experiments>
</comment>
<comment type="subcellular location">
    <subcellularLocation>
        <location evidence="2">Cytoplasm</location>
    </subcellularLocation>
    <subcellularLocation>
        <location evidence="2">Nucleus</location>
    </subcellularLocation>
    <subcellularLocation>
        <location evidence="21">Cell projection</location>
        <location evidence="21">Lamellipodium</location>
    </subcellularLocation>
    <text evidence="21">Recruitment to lamellipodia of migrating cells is enhanced by phosphorylation at Tyr-380.</text>
</comment>
<comment type="alternative products">
    <event type="alternative splicing"/>
    <isoform>
        <id>Q14790-1</id>
        <name>1</name>
        <name>Alpha-1</name>
        <sequence type="displayed"/>
    </isoform>
    <isoform>
        <id>Q14790-2</id>
        <name>2</name>
        <name>Alpha-2</name>
        <name>MCH5-beta</name>
        <sequence type="described" ref="VSP_000810"/>
    </isoform>
    <isoform>
        <id>Q14790-3</id>
        <name>3</name>
        <name>Alpha-3</name>
        <sequence type="described" ref="VSP_000813"/>
    </isoform>
    <isoform>
        <id>Q14790-4</id>
        <name>4</name>
        <name>Alpha-4</name>
        <sequence type="described" ref="VSP_000809 VSP_000810"/>
    </isoform>
    <isoform>
        <id>Q14790-5</id>
        <name>5</name>
        <name>Beta-1</name>
        <sequence type="described" ref="VSP_000814 VSP_000815"/>
    </isoform>
    <isoform>
        <id>Q14790-6</id>
        <name>6</name>
        <name>Beta-2</name>
        <sequence type="described" ref="VSP_000811 VSP_000812"/>
    </isoform>
    <isoform>
        <id>Q14790-7</id>
        <name>7</name>
        <name>Beta-3</name>
        <name evidence="46">8L</name>
        <sequence type="described" ref="VSP_000816 VSP_000817"/>
    </isoform>
    <isoform>
        <id>Q14790-8</id>
        <name>8</name>
        <name>Beta-4</name>
        <sequence type="described" ref="VSP_000810 VSP_000816 VSP_000817"/>
    </isoform>
    <isoform>
        <id>Q14790-9</id>
        <name>9</name>
        <name>8L</name>
        <sequence type="described" ref="VSP_000808"/>
    </isoform>
</comment>
<comment type="tissue specificity">
    <text>Isoform 1, isoform 5 and isoform 7 are expressed in a wide variety of tissues. Highest expression in peripheral blood leukocytes, spleen, thymus and liver. Barely detectable in brain, testis and skeletal muscle.</text>
</comment>
<comment type="domain">
    <text evidence="21">The catalytic domain is sufficient for recruitment to lamellipodia but catalytic activity is not necessary.</text>
</comment>
<comment type="domain">
    <molecule>Isoform 9</molecule>
    <text evidence="9">Contains a N-terminal extension that is required for interaction with the BCAP31 complex.</text>
</comment>
<comment type="PTM">
    <text evidence="39 41">Generation of the p10 and p18 subunits requires association with the death-inducing signaling complex (DISC), whereas additional processing is likely due to the autocatalytic activity of the activated protease. GZMB and CASP10 can be involved in these processing events.</text>
</comment>
<comment type="PTM">
    <text evidence="17 21 24 28">Phosphorylation on Ser-387 during mitosis by CDK1 inhibits activation by proteolysis and prevents apoptosis (PubMed:20937773). Phosphorylation on Tyr-380 by SRC is mediated by interaction with the SRC SH2 domain and does not affect dimerization or recruitment to the death-inducing signaling complex (DISC) but negatively regulates DISC-mediated processing and activation of CASP8, down-regulating its proapoptotic function (PubMed:16619028, PubMed:27109099). Phosphorylation on Tyr-380 also enhances localization to lamellipodia in migrating cells (PubMed:18216014).</text>
</comment>
<comment type="PTM">
    <text evidence="34 35">(Microbial infection) ADP-riboxanation by C.violaceum CopC blocks CASP8 processing, preventing CASP8 activation and ability to mediate extrinsic apoptosis.</text>
</comment>
<comment type="PTM">
    <text evidence="39">(Microbial infection) Proteolytically cleaved by the cowpox virus CRMA death inhibitory protein.</text>
</comment>
<comment type="polymorphism">
    <text evidence="20">Genetic variations in CASP8 are associated with reduced risk of lung cancer [MIM:211980] in a population of Han Chinese subjects. Genetic variations are also associated with decreased risk of cancer of various other forms including esophageal, gastric, colorectal, cervical, and breast, acting in an allele dose-dependent manner.</text>
</comment>
<comment type="disease" evidence="11">
    <disease id="DI-01326">
        <name>Caspase-8 deficiency</name>
        <acronym>CASP8D</acronym>
        <description>Disorder resembling autoimmune lymphoproliferative syndrome (ALPS). It is characterized by lymphadenopathy, splenomegaly, and defective CD95-induced apoptosis of peripheral blood lymphocytes (PBLs). It leads to defects in activation of T-lymphocytes, B-lymphocytes, and natural killer cells leading to immunodeficiency characterized by recurrent sinopulmonary and herpes simplex virus infections and poor responses to immunization.</description>
        <dbReference type="MIM" id="607271"/>
    </disease>
    <text>The disease is caused by variants affecting the gene represented in this entry.</text>
</comment>
<comment type="miscellaneous">
    <molecule>Isoform 7</molecule>
    <text evidence="54">May be produced at very low levels due to a premature stop codon in the mRNA, leading to nonsense-mediated mRNA decay.</text>
</comment>
<comment type="similarity">
    <text evidence="54">Belongs to the peptidase C14A family.</text>
</comment>
<comment type="sequence caution" evidence="54">
    <conflict type="miscellaneous discrepancy">
        <sequence resource="EMBL-CDS" id="CAA66858"/>
    </conflict>
</comment>
<comment type="sequence caution" evidence="54">
    <conflict type="miscellaneous discrepancy">
        <sequence resource="EMBL-CDS" id="CAA66859"/>
    </conflict>
</comment>
<comment type="online information" name="CASP8base">
    <link uri="https://databases.lovd.nl/shared/genes/CASP8"/>
    <text>CASP8 mutation db</text>
</comment>
<name>CASP8_HUMAN</name>
<dbReference type="EC" id="3.4.22.61" evidence="26 32 33 39"/>
<dbReference type="EMBL" id="X98172">
    <property type="protein sequence ID" value="CAA66853.1"/>
    <property type="molecule type" value="mRNA"/>
</dbReference>
<dbReference type="EMBL" id="X98173">
    <property type="protein sequence ID" value="CAA66854.1"/>
    <property type="molecule type" value="mRNA"/>
</dbReference>
<dbReference type="EMBL" id="X98174">
    <property type="protein sequence ID" value="CAA66855.1"/>
    <property type="molecule type" value="mRNA"/>
</dbReference>
<dbReference type="EMBL" id="X98175">
    <property type="protein sequence ID" value="CAA66856.1"/>
    <property type="molecule type" value="mRNA"/>
</dbReference>
<dbReference type="EMBL" id="X98176">
    <property type="protein sequence ID" value="CAA66857.1"/>
    <property type="molecule type" value="mRNA"/>
</dbReference>
<dbReference type="EMBL" id="X98177">
    <property type="protein sequence ID" value="CAA66858.1"/>
    <property type="status" value="ALT_SEQ"/>
    <property type="molecule type" value="mRNA"/>
</dbReference>
<dbReference type="EMBL" id="X98178">
    <property type="protein sequence ID" value="CAA66859.1"/>
    <property type="status" value="ALT_SEQ"/>
    <property type="molecule type" value="mRNA"/>
</dbReference>
<dbReference type="EMBL" id="U58143">
    <property type="protein sequence ID" value="AAC50602.1"/>
    <property type="molecule type" value="mRNA"/>
</dbReference>
<dbReference type="EMBL" id="U60520">
    <property type="protein sequence ID" value="AAC50645.1"/>
    <property type="molecule type" value="mRNA"/>
</dbReference>
<dbReference type="EMBL" id="AF009620">
    <property type="protein sequence ID" value="AAB70913.1"/>
    <property type="molecule type" value="mRNA"/>
</dbReference>
<dbReference type="EMBL" id="AF102146">
    <property type="protein sequence ID" value="AAD24962.1"/>
    <property type="molecule type" value="Genomic_DNA"/>
</dbReference>
<dbReference type="EMBL" id="AF102139">
    <property type="protein sequence ID" value="AAD24962.1"/>
    <property type="status" value="JOINED"/>
    <property type="molecule type" value="Genomic_DNA"/>
</dbReference>
<dbReference type="EMBL" id="AF102140">
    <property type="protein sequence ID" value="AAD24962.1"/>
    <property type="status" value="JOINED"/>
    <property type="molecule type" value="Genomic_DNA"/>
</dbReference>
<dbReference type="EMBL" id="AF102141">
    <property type="protein sequence ID" value="AAD24962.1"/>
    <property type="status" value="JOINED"/>
    <property type="molecule type" value="Genomic_DNA"/>
</dbReference>
<dbReference type="EMBL" id="AF102142">
    <property type="protein sequence ID" value="AAD24962.1"/>
    <property type="status" value="JOINED"/>
    <property type="molecule type" value="Genomic_DNA"/>
</dbReference>
<dbReference type="EMBL" id="AF102143">
    <property type="protein sequence ID" value="AAD24962.1"/>
    <property type="status" value="JOINED"/>
    <property type="molecule type" value="Genomic_DNA"/>
</dbReference>
<dbReference type="EMBL" id="AF102144">
    <property type="protein sequence ID" value="AAD24962.1"/>
    <property type="status" value="JOINED"/>
    <property type="molecule type" value="Genomic_DNA"/>
</dbReference>
<dbReference type="EMBL" id="AF102145">
    <property type="protein sequence ID" value="AAD24962.1"/>
    <property type="status" value="JOINED"/>
    <property type="molecule type" value="Genomic_DNA"/>
</dbReference>
<dbReference type="EMBL" id="AB038985">
    <property type="protein sequence ID" value="BAB32555.1"/>
    <property type="molecule type" value="Genomic_DNA"/>
</dbReference>
<dbReference type="EMBL" id="AF380342">
    <property type="protein sequence ID" value="AAK57437.1"/>
    <property type="molecule type" value="mRNA"/>
</dbReference>
<dbReference type="EMBL" id="AF422925">
    <property type="protein sequence ID" value="AAL87628.1"/>
    <property type="molecule type" value="mRNA"/>
</dbReference>
<dbReference type="EMBL" id="AF422926">
    <property type="protein sequence ID" value="AAL87629.1"/>
    <property type="molecule type" value="mRNA"/>
</dbReference>
<dbReference type="EMBL" id="AF422927">
    <property type="protein sequence ID" value="AAL87630.1"/>
    <property type="molecule type" value="mRNA"/>
</dbReference>
<dbReference type="EMBL" id="AF422928">
    <property type="protein sequence ID" value="AAL87631.1"/>
    <property type="molecule type" value="mRNA"/>
</dbReference>
<dbReference type="EMBL" id="AF422929">
    <property type="protein sequence ID" value="AAL87632.1"/>
    <property type="molecule type" value="mRNA"/>
</dbReference>
<dbReference type="EMBL" id="DQ355026">
    <property type="protein sequence ID" value="ABC67468.1"/>
    <property type="molecule type" value="Genomic_DNA"/>
</dbReference>
<dbReference type="EMBL" id="AC007256">
    <property type="protein sequence ID" value="AAY24225.1"/>
    <property type="molecule type" value="Genomic_DNA"/>
</dbReference>
<dbReference type="EMBL" id="BC028223">
    <property type="status" value="NOT_ANNOTATED_CDS"/>
    <property type="molecule type" value="mRNA"/>
</dbReference>
<dbReference type="CCDS" id="CCDS2342.1">
    <molecule id="Q14790-1"/>
</dbReference>
<dbReference type="CCDS" id="CCDS2343.1">
    <molecule id="Q14790-2"/>
</dbReference>
<dbReference type="CCDS" id="CCDS2345.1">
    <molecule id="Q14790-5"/>
</dbReference>
<dbReference type="CCDS" id="CCDS42798.1">
    <molecule id="Q14790-9"/>
</dbReference>
<dbReference type="CCDS" id="CCDS42799.1">
    <molecule id="Q14790-4"/>
</dbReference>
<dbReference type="CCDS" id="CCDS92923.1">
    <molecule id="Q14790-3"/>
</dbReference>
<dbReference type="RefSeq" id="NP_001073593.1">
    <molecule id="Q14790-2"/>
    <property type="nucleotide sequence ID" value="NM_001080124.2"/>
</dbReference>
<dbReference type="RefSeq" id="NP_001073594.1">
    <molecule id="Q14790-9"/>
    <property type="nucleotide sequence ID" value="NM_001080125.2"/>
</dbReference>
<dbReference type="RefSeq" id="NP_001219.2">
    <molecule id="Q14790-4"/>
    <property type="nucleotide sequence ID" value="NM_001228.4"/>
</dbReference>
<dbReference type="RefSeq" id="NP_001358980.1">
    <molecule id="Q14790-1"/>
    <property type="nucleotide sequence ID" value="NM_001372051.1"/>
</dbReference>
<dbReference type="RefSeq" id="NP_001387577.1">
    <molecule id="Q14790-1"/>
    <property type="nucleotide sequence ID" value="NM_001400648.1"/>
</dbReference>
<dbReference type="RefSeq" id="NP_001387580.1">
    <molecule id="Q14790-1"/>
    <property type="nucleotide sequence ID" value="NM_001400651.1"/>
</dbReference>
<dbReference type="RefSeq" id="NP_001387582.1">
    <molecule id="Q14790-1"/>
    <property type="nucleotide sequence ID" value="NM_001400653.1"/>
</dbReference>
<dbReference type="RefSeq" id="NP_001387583.1">
    <molecule id="Q14790-1"/>
    <property type="nucleotide sequence ID" value="NM_001400654.1"/>
</dbReference>
<dbReference type="RefSeq" id="NP_001387584.1">
    <molecule id="Q14790-1"/>
    <property type="nucleotide sequence ID" value="NM_001400655.1"/>
</dbReference>
<dbReference type="RefSeq" id="NP_001387585.1">
    <molecule id="Q14790-1"/>
    <property type="nucleotide sequence ID" value="NM_001400656.1"/>
</dbReference>
<dbReference type="RefSeq" id="NP_001387586.1">
    <molecule id="Q14790-1"/>
    <property type="nucleotide sequence ID" value="NM_001400657.1"/>
</dbReference>
<dbReference type="RefSeq" id="NP_001387587.1">
    <molecule id="Q14790-2"/>
    <property type="nucleotide sequence ID" value="NM_001400658.1"/>
</dbReference>
<dbReference type="RefSeq" id="NP_001387588.1">
    <molecule id="Q14790-2"/>
    <property type="nucleotide sequence ID" value="NM_001400659.1"/>
</dbReference>
<dbReference type="RefSeq" id="NP_001387589.1">
    <molecule id="Q14790-2"/>
    <property type="nucleotide sequence ID" value="NM_001400660.1"/>
</dbReference>
<dbReference type="RefSeq" id="NP_001387590.1">
    <molecule id="Q14790-2"/>
    <property type="nucleotide sequence ID" value="NM_001400661.1"/>
</dbReference>
<dbReference type="RefSeq" id="NP_001387591.1">
    <molecule id="Q14790-2"/>
    <property type="nucleotide sequence ID" value="NM_001400662.1"/>
</dbReference>
<dbReference type="RefSeq" id="NP_001387592.1">
    <molecule id="Q14790-2"/>
    <property type="nucleotide sequence ID" value="NM_001400663.1"/>
</dbReference>
<dbReference type="RefSeq" id="NP_001387596.1">
    <molecule id="Q14790-3"/>
    <property type="nucleotide sequence ID" value="NM_001400667.1"/>
</dbReference>
<dbReference type="RefSeq" id="NP_001387597.1">
    <molecule id="Q14790-3"/>
    <property type="nucleotide sequence ID" value="NM_001400668.1"/>
</dbReference>
<dbReference type="RefSeq" id="NP_001387608.1">
    <molecule id="Q14790-5"/>
    <property type="nucleotide sequence ID" value="NM_001400679.1"/>
</dbReference>
<dbReference type="RefSeq" id="NP_203519.1">
    <molecule id="Q14790-1"/>
    <property type="nucleotide sequence ID" value="NM_033355.4"/>
</dbReference>
<dbReference type="RefSeq" id="NP_203520.1">
    <molecule id="Q14790-2"/>
    <property type="nucleotide sequence ID" value="NM_033356.4"/>
</dbReference>
<dbReference type="RefSeq" id="NP_203522.1">
    <property type="nucleotide sequence ID" value="NM_033358.3"/>
</dbReference>
<dbReference type="RefSeq" id="XP_005246943.1">
    <property type="nucleotide sequence ID" value="XM_005246886.1"/>
</dbReference>
<dbReference type="RefSeq" id="XP_005246944.1">
    <property type="nucleotide sequence ID" value="XM_005246887.1"/>
</dbReference>
<dbReference type="RefSeq" id="XP_005246945.1">
    <property type="nucleotide sequence ID" value="XM_005246888.1"/>
</dbReference>
<dbReference type="RefSeq" id="XP_005246946.1">
    <property type="nucleotide sequence ID" value="XM_005246889.1"/>
</dbReference>
<dbReference type="RefSeq" id="XP_005246947.1">
    <property type="nucleotide sequence ID" value="XM_005246890.3"/>
</dbReference>
<dbReference type="RefSeq" id="XP_005246948.1">
    <property type="nucleotide sequence ID" value="XM_005246891.4"/>
</dbReference>
<dbReference type="RefSeq" id="XP_005246949.1">
    <property type="nucleotide sequence ID" value="XM_005246892.1"/>
</dbReference>
<dbReference type="RefSeq" id="XP_006712852.1">
    <property type="nucleotide sequence ID" value="XM_006712789.1"/>
</dbReference>
<dbReference type="RefSeq" id="XP_006712853.1">
    <property type="nucleotide sequence ID" value="XM_006712790.3"/>
</dbReference>
<dbReference type="RefSeq" id="XP_006712856.1">
    <property type="nucleotide sequence ID" value="XM_006712793.2"/>
</dbReference>
<dbReference type="RefSeq" id="XP_047301915.1">
    <molecule id="Q14790-2"/>
    <property type="nucleotide sequence ID" value="XM_047445959.1"/>
</dbReference>
<dbReference type="RefSeq" id="XP_054200090.1">
    <molecule id="Q14790-2"/>
    <property type="nucleotide sequence ID" value="XM_054344115.1"/>
</dbReference>
<dbReference type="PDB" id="1F9E">
    <property type="method" value="X-ray"/>
    <property type="resolution" value="2.90 A"/>
    <property type="chains" value="A/C/E/G/I/K=222-374, B/D/F/H/J/L=390-478"/>
</dbReference>
<dbReference type="PDB" id="1I4E">
    <property type="method" value="X-ray"/>
    <property type="resolution" value="3.00 A"/>
    <property type="chains" value="B=222-479"/>
</dbReference>
<dbReference type="PDB" id="1QDU">
    <property type="method" value="X-ray"/>
    <property type="resolution" value="2.80 A"/>
    <property type="chains" value="A/C/E/G/I/K=222-374, B/D/F/H/J/L=390-477"/>
</dbReference>
<dbReference type="PDB" id="1QTN">
    <property type="method" value="X-ray"/>
    <property type="resolution" value="1.20 A"/>
    <property type="chains" value="A=211-374, B=385-479"/>
</dbReference>
<dbReference type="PDB" id="2C2Z">
    <property type="method" value="X-ray"/>
    <property type="resolution" value="1.95 A"/>
    <property type="chains" value="A=218-374, B=376-479"/>
</dbReference>
<dbReference type="PDB" id="2FUN">
    <property type="method" value="X-ray"/>
    <property type="resolution" value="3.00 A"/>
    <property type="chains" value="B/D=222-479"/>
</dbReference>
<dbReference type="PDB" id="2K7Z">
    <property type="method" value="NMR"/>
    <property type="chains" value="A=217-479"/>
</dbReference>
<dbReference type="PDB" id="2Y1L">
    <property type="method" value="X-ray"/>
    <property type="resolution" value="1.80 A"/>
    <property type="chains" value="A/C=218-374, B/D=376-479"/>
</dbReference>
<dbReference type="PDB" id="3H11">
    <property type="method" value="X-ray"/>
    <property type="resolution" value="1.90 A"/>
    <property type="chains" value="B=217-479"/>
</dbReference>
<dbReference type="PDB" id="3KJN">
    <property type="method" value="X-ray"/>
    <property type="resolution" value="1.80 A"/>
    <property type="chains" value="A=211-374, B=385-479"/>
</dbReference>
<dbReference type="PDB" id="3KJQ">
    <property type="method" value="X-ray"/>
    <property type="resolution" value="1.80 A"/>
    <property type="chains" value="A=211-374, B=385-479"/>
</dbReference>
<dbReference type="PDB" id="4JJ7">
    <property type="method" value="X-ray"/>
    <property type="resolution" value="1.18 A"/>
    <property type="chains" value="A=217-479"/>
</dbReference>
<dbReference type="PDB" id="4PRZ">
    <property type="method" value="X-ray"/>
    <property type="resolution" value="2.12 A"/>
    <property type="chains" value="A=217-479"/>
</dbReference>
<dbReference type="PDB" id="4PS1">
    <property type="method" value="X-ray"/>
    <property type="resolution" value="1.73 A"/>
    <property type="chains" value="A/B/C/D=217-479"/>
</dbReference>
<dbReference type="PDB" id="4ZBW">
    <property type="method" value="X-ray"/>
    <property type="resolution" value="2.20 A"/>
    <property type="chains" value="A/B=2-188"/>
</dbReference>
<dbReference type="PDB" id="5H31">
    <property type="method" value="X-ray"/>
    <property type="resolution" value="3.17 A"/>
    <property type="chains" value="A/B/C/D=1-188"/>
</dbReference>
<dbReference type="PDB" id="5H33">
    <property type="method" value="X-ray"/>
    <property type="resolution" value="3.60 A"/>
    <property type="chains" value="A/B=1-188"/>
</dbReference>
<dbReference type="PDB" id="5JQE">
    <property type="method" value="X-ray"/>
    <property type="resolution" value="3.16 A"/>
    <property type="chains" value="A=1-186"/>
</dbReference>
<dbReference type="PDB" id="5L08">
    <property type="method" value="EM"/>
    <property type="resolution" value="4.60 A"/>
    <property type="chains" value="A/B/C/D/E/F/G/H/I=1-184"/>
</dbReference>
<dbReference type="PDB" id="6AGW">
    <property type="method" value="X-ray"/>
    <property type="resolution" value="2.09 A"/>
    <property type="chains" value="A=1-180"/>
</dbReference>
<dbReference type="PDB" id="6PX9">
    <property type="method" value="X-ray"/>
    <property type="resolution" value="2.88 A"/>
    <property type="chains" value="A/B/C/D/E/F=217-479"/>
</dbReference>
<dbReference type="PDB" id="7DEE">
    <property type="method" value="NMR"/>
    <property type="chains" value="B=2-9"/>
</dbReference>
<dbReference type="PDB" id="7LVJ">
    <property type="method" value="X-ray"/>
    <property type="resolution" value="1.50 A"/>
    <property type="chains" value="A=1-188"/>
</dbReference>
<dbReference type="PDB" id="7LVM">
    <property type="method" value="X-ray"/>
    <property type="resolution" value="1.47 A"/>
    <property type="chains" value="A=2-188"/>
</dbReference>
<dbReference type="PDB" id="8YBX">
    <property type="method" value="EM"/>
    <property type="resolution" value="3.68 A"/>
    <property type="chains" value="A/B/C=1-479"/>
</dbReference>
<dbReference type="PDB" id="8YD7">
    <property type="method" value="X-ray"/>
    <property type="resolution" value="3.32 A"/>
    <property type="chains" value="A/B/C/D/E=1-185"/>
</dbReference>
<dbReference type="PDB" id="8YD8">
    <property type="method" value="X-ray"/>
    <property type="resolution" value="3.11 A"/>
    <property type="chains" value="A/B/C/D/E=1-185"/>
</dbReference>
<dbReference type="PDB" id="8YM4">
    <property type="method" value="X-ray"/>
    <property type="resolution" value="2.34 A"/>
    <property type="chains" value="A/B/C/D=1-185"/>
</dbReference>
<dbReference type="PDB" id="8YM5">
    <property type="method" value="X-ray"/>
    <property type="resolution" value="2.09 A"/>
    <property type="chains" value="A/B/C/D=1-185"/>
</dbReference>
<dbReference type="PDB" id="8YM6">
    <property type="method" value="X-ray"/>
    <property type="resolution" value="3.30 A"/>
    <property type="chains" value="A/B/C/D=1-185"/>
</dbReference>
<dbReference type="PDB" id="8YNI">
    <property type="method" value="EM"/>
    <property type="resolution" value="3.66 A"/>
    <property type="chains" value="A/B/C=1-479"/>
</dbReference>
<dbReference type="PDB" id="8YNK">
    <property type="method" value="EM"/>
    <property type="resolution" value="3.62 A"/>
    <property type="chains" value="A/B/C=1-479"/>
</dbReference>
<dbReference type="PDB" id="8YNL">
    <property type="method" value="EM"/>
    <property type="resolution" value="3.55 A"/>
    <property type="chains" value="A/B/C=1-479"/>
</dbReference>
<dbReference type="PDB" id="8YNM">
    <property type="method" value="EM"/>
    <property type="resolution" value="3.49 A"/>
    <property type="chains" value="A/B/C=1-479"/>
</dbReference>
<dbReference type="PDB" id="8YNN">
    <property type="method" value="EM"/>
    <property type="resolution" value="3.97 A"/>
    <property type="chains" value="A/B/C=1-479"/>
</dbReference>
<dbReference type="PDBsum" id="1F9E"/>
<dbReference type="PDBsum" id="1I4E"/>
<dbReference type="PDBsum" id="1QDU"/>
<dbReference type="PDBsum" id="1QTN"/>
<dbReference type="PDBsum" id="2C2Z"/>
<dbReference type="PDBsum" id="2FUN"/>
<dbReference type="PDBsum" id="2K7Z"/>
<dbReference type="PDBsum" id="2Y1L"/>
<dbReference type="PDBsum" id="3H11"/>
<dbReference type="PDBsum" id="3KJN"/>
<dbReference type="PDBsum" id="3KJQ"/>
<dbReference type="PDBsum" id="4JJ7"/>
<dbReference type="PDBsum" id="4PRZ"/>
<dbReference type="PDBsum" id="4PS1"/>
<dbReference type="PDBsum" id="4ZBW"/>
<dbReference type="PDBsum" id="5H31"/>
<dbReference type="PDBsum" id="5H33"/>
<dbReference type="PDBsum" id="5JQE"/>
<dbReference type="PDBsum" id="5L08"/>
<dbReference type="PDBsum" id="6AGW"/>
<dbReference type="PDBsum" id="6PX9"/>
<dbReference type="PDBsum" id="7DEE"/>
<dbReference type="PDBsum" id="7LVJ"/>
<dbReference type="PDBsum" id="7LVM"/>
<dbReference type="PDBsum" id="8YBX"/>
<dbReference type="PDBsum" id="8YD7"/>
<dbReference type="PDBsum" id="8YD8"/>
<dbReference type="PDBsum" id="8YM4"/>
<dbReference type="PDBsum" id="8YM5"/>
<dbReference type="PDBsum" id="8YM6"/>
<dbReference type="PDBsum" id="8YNI"/>
<dbReference type="PDBsum" id="8YNK"/>
<dbReference type="PDBsum" id="8YNL"/>
<dbReference type="PDBsum" id="8YNM"/>
<dbReference type="PDBsum" id="8YNN"/>
<dbReference type="BMRB" id="Q14790"/>
<dbReference type="EMDB" id="EMD-39126"/>
<dbReference type="EMDB" id="EMD-39424"/>
<dbReference type="EMDB" id="EMD-39425"/>
<dbReference type="EMDB" id="EMD-39426"/>
<dbReference type="EMDB" id="EMD-39427"/>
<dbReference type="EMDB" id="EMD-39428"/>
<dbReference type="EMDB" id="EMD-8300"/>
<dbReference type="SMR" id="Q14790"/>
<dbReference type="BioGRID" id="107291">
    <property type="interactions" value="187"/>
</dbReference>
<dbReference type="ComplexPortal" id="CPX-1907">
    <property type="entry name" value="Ripoptosome"/>
</dbReference>
<dbReference type="ComplexPortal" id="CPX-975">
    <property type="entry name" value="Caspase-8 complex"/>
</dbReference>
<dbReference type="CORUM" id="Q14790"/>
<dbReference type="DIP" id="DIP-30915N"/>
<dbReference type="ELM" id="Q14790"/>
<dbReference type="FunCoup" id="Q14790">
    <property type="interactions" value="1246"/>
</dbReference>
<dbReference type="IntAct" id="Q14790">
    <property type="interactions" value="185"/>
</dbReference>
<dbReference type="MINT" id="Q14790"/>
<dbReference type="STRING" id="9606.ENSP00000351273"/>
<dbReference type="BindingDB" id="Q14790"/>
<dbReference type="ChEMBL" id="CHEMBL3776"/>
<dbReference type="DrugBank" id="DB05103">
    <property type="generic name" value="AN-9"/>
</dbReference>
<dbReference type="DrugBank" id="DB12651">
    <property type="generic name" value="Bardoxolone"/>
</dbReference>
<dbReference type="DrugBank" id="DB11752">
    <property type="generic name" value="Bryostatin 1"/>
</dbReference>
<dbReference type="DrugBank" id="DB12843">
    <property type="generic name" value="Oleandrin"/>
</dbReference>
<dbReference type="DrugBank" id="DB04297">
    <property type="generic name" value="Trichostatin A"/>
</dbReference>
<dbReference type="GuidetoPHARMACOLOGY" id="1624"/>
<dbReference type="MEROPS" id="C14.009"/>
<dbReference type="GlyGen" id="Q14790">
    <property type="glycosylation" value="2 sites"/>
</dbReference>
<dbReference type="iPTMnet" id="Q14790"/>
<dbReference type="PhosphoSitePlus" id="Q14790"/>
<dbReference type="SwissPalm" id="Q14790"/>
<dbReference type="BioMuta" id="CASP8"/>
<dbReference type="DMDM" id="2493531"/>
<dbReference type="CPTAC" id="CPTAC-794"/>
<dbReference type="CPTAC" id="CPTAC-795"/>
<dbReference type="jPOST" id="Q14790"/>
<dbReference type="MassIVE" id="Q14790"/>
<dbReference type="PaxDb" id="9606-ENSP00000351273"/>
<dbReference type="PeptideAtlas" id="Q14790"/>
<dbReference type="ProteomicsDB" id="60172">
    <molecule id="Q14790-1"/>
</dbReference>
<dbReference type="ProteomicsDB" id="60173">
    <molecule id="Q14790-2"/>
</dbReference>
<dbReference type="ProteomicsDB" id="60174">
    <molecule id="Q14790-3"/>
</dbReference>
<dbReference type="ProteomicsDB" id="60175">
    <molecule id="Q14790-4"/>
</dbReference>
<dbReference type="ProteomicsDB" id="60176">
    <molecule id="Q14790-5"/>
</dbReference>
<dbReference type="ProteomicsDB" id="60177">
    <molecule id="Q14790-6"/>
</dbReference>
<dbReference type="ProteomicsDB" id="60178">
    <molecule id="Q14790-7"/>
</dbReference>
<dbReference type="ProteomicsDB" id="60179">
    <molecule id="Q14790-8"/>
</dbReference>
<dbReference type="ProteomicsDB" id="60180">
    <molecule id="Q14790-9"/>
</dbReference>
<dbReference type="Pumba" id="Q14790"/>
<dbReference type="ABCD" id="Q14790">
    <property type="antibodies" value="1 sequenced antibody"/>
</dbReference>
<dbReference type="Antibodypedia" id="697">
    <property type="antibodies" value="1501 antibodies from 53 providers"/>
</dbReference>
<dbReference type="DNASU" id="841"/>
<dbReference type="Ensembl" id="ENST00000264275.9">
    <molecule id="Q14790-4"/>
    <property type="protein sequence ID" value="ENSP00000264275.5"/>
    <property type="gene ID" value="ENSG00000064012.24"/>
</dbReference>
<dbReference type="Ensembl" id="ENST00000323492.11">
    <molecule id="Q14790-2"/>
    <property type="protein sequence ID" value="ENSP00000325722.7"/>
    <property type="gene ID" value="ENSG00000064012.24"/>
</dbReference>
<dbReference type="Ensembl" id="ENST00000358485.8">
    <molecule id="Q14790-9"/>
    <property type="protein sequence ID" value="ENSP00000351273.4"/>
    <property type="gene ID" value="ENSG00000064012.24"/>
</dbReference>
<dbReference type="Ensembl" id="ENST00000392258.7">
    <molecule id="Q14790-5"/>
    <property type="protein sequence ID" value="ENSP00000376087.3"/>
    <property type="gene ID" value="ENSG00000064012.24"/>
</dbReference>
<dbReference type="Ensembl" id="ENST00000392263.6">
    <molecule id="Q14790-2"/>
    <property type="protein sequence ID" value="ENSP00000376091.2"/>
    <property type="gene ID" value="ENSG00000064012.24"/>
</dbReference>
<dbReference type="Ensembl" id="ENST00000413726.6">
    <molecule id="Q14790-1"/>
    <property type="protein sequence ID" value="ENSP00000397528.2"/>
    <property type="gene ID" value="ENSG00000064012.24"/>
</dbReference>
<dbReference type="Ensembl" id="ENST00000432109.6">
    <molecule id="Q14790-1"/>
    <property type="protein sequence ID" value="ENSP00000412523.2"/>
    <property type="gene ID" value="ENSG00000064012.24"/>
</dbReference>
<dbReference type="Ensembl" id="ENST00000440732.6">
    <molecule id="Q14790-1"/>
    <property type="protein sequence ID" value="ENSP00000396869.2"/>
    <property type="gene ID" value="ENSG00000064012.24"/>
</dbReference>
<dbReference type="Ensembl" id="ENST00000444430.3">
    <molecule id="Q14790-3"/>
    <property type="protein sequence ID" value="ENSP00000394434.3"/>
    <property type="gene ID" value="ENSG00000064012.24"/>
</dbReference>
<dbReference type="Ensembl" id="ENST00000447616.6">
    <molecule id="Q14790-6"/>
    <property type="protein sequence ID" value="ENSP00000388306.2"/>
    <property type="gene ID" value="ENSG00000064012.24"/>
</dbReference>
<dbReference type="Ensembl" id="ENST00000673742.1">
    <molecule id="Q14790-1"/>
    <property type="protein sequence ID" value="ENSP00000501268.1"/>
    <property type="gene ID" value="ENSG00000064012.24"/>
</dbReference>
<dbReference type="Ensembl" id="ENST00000696067.1">
    <molecule id="Q14790-1"/>
    <property type="protein sequence ID" value="ENSP00000512369.1"/>
    <property type="gene ID" value="ENSG00000064012.24"/>
</dbReference>
<dbReference type="Ensembl" id="ENST00000696068.1">
    <molecule id="Q14790-6"/>
    <property type="protein sequence ID" value="ENSP00000512370.1"/>
    <property type="gene ID" value="ENSG00000064012.24"/>
</dbReference>
<dbReference type="Ensembl" id="ENST00000696087.1">
    <molecule id="Q14790-2"/>
    <property type="protein sequence ID" value="ENSP00000512382.1"/>
    <property type="gene ID" value="ENSG00000064012.24"/>
</dbReference>
<dbReference type="GeneID" id="841"/>
<dbReference type="KEGG" id="hsa:841"/>
<dbReference type="MANE-Select" id="ENST00000673742.1">
    <property type="protein sequence ID" value="ENSP00000501268.1"/>
    <property type="RefSeq nucleotide sequence ID" value="NM_001372051.1"/>
    <property type="RefSeq protein sequence ID" value="NP_001358980.1"/>
</dbReference>
<dbReference type="UCSC" id="uc002uxo.2">
    <molecule id="Q14790-1"/>
    <property type="organism name" value="human"/>
</dbReference>
<dbReference type="AGR" id="HGNC:1509"/>
<dbReference type="CTD" id="841"/>
<dbReference type="DisGeNET" id="841"/>
<dbReference type="GeneCards" id="CASP8"/>
<dbReference type="HGNC" id="HGNC:1509">
    <property type="gene designation" value="CASP8"/>
</dbReference>
<dbReference type="HPA" id="ENSG00000064012">
    <property type="expression patterns" value="Tissue enhanced (bone)"/>
</dbReference>
<dbReference type="MalaCards" id="CASP8"/>
<dbReference type="MIM" id="211980">
    <property type="type" value="phenotype"/>
</dbReference>
<dbReference type="MIM" id="601763">
    <property type="type" value="gene"/>
</dbReference>
<dbReference type="MIM" id="607271">
    <property type="type" value="phenotype"/>
</dbReference>
<dbReference type="neXtProt" id="NX_Q14790"/>
<dbReference type="OpenTargets" id="ENSG00000064012"/>
<dbReference type="Orphanet" id="210159">
    <property type="disease" value="Adult hepatocellular carcinoma"/>
</dbReference>
<dbReference type="Orphanet" id="275517">
    <property type="disease" value="Autoimmune lymphoproliferative syndrome-recurrent viral infections due to CASP8 deficiency"/>
</dbReference>
<dbReference type="PharmGKB" id="PA26092"/>
<dbReference type="VEuPathDB" id="HostDB:ENSG00000064012"/>
<dbReference type="eggNOG" id="KOG3573">
    <property type="taxonomic scope" value="Eukaryota"/>
</dbReference>
<dbReference type="GeneTree" id="ENSGT00940000160319"/>
<dbReference type="HOGENOM" id="CLU_036904_4_2_1"/>
<dbReference type="InParanoid" id="Q14790"/>
<dbReference type="OMA" id="WNRIEDG"/>
<dbReference type="OrthoDB" id="6114029at2759"/>
<dbReference type="PAN-GO" id="Q14790">
    <property type="GO annotations" value="8 GO annotations based on evolutionary models"/>
</dbReference>
<dbReference type="PhylomeDB" id="Q14790"/>
<dbReference type="TreeFam" id="TF102023"/>
<dbReference type="BioCyc" id="MetaCyc:HS00790-MONOMER"/>
<dbReference type="BRENDA" id="3.4.22.61">
    <property type="organism ID" value="2681"/>
</dbReference>
<dbReference type="PathwayCommons" id="Q14790"/>
<dbReference type="Reactome" id="R-HSA-111465">
    <property type="pathway name" value="Apoptotic cleavage of cellular proteins"/>
</dbReference>
<dbReference type="Reactome" id="R-HSA-140534">
    <property type="pathway name" value="Caspase activation via Death Receptors in the presence of ligand"/>
</dbReference>
<dbReference type="Reactome" id="R-HSA-168638">
    <property type="pathway name" value="NOD1/2 Signaling Pathway"/>
</dbReference>
<dbReference type="Reactome" id="R-HSA-2562578">
    <property type="pathway name" value="TRIF-mediated programmed cell death"/>
</dbReference>
<dbReference type="Reactome" id="R-HSA-264870">
    <property type="pathway name" value="Caspase-mediated cleavage of cytoskeletal proteins"/>
</dbReference>
<dbReference type="Reactome" id="R-HSA-3371378">
    <property type="pathway name" value="Regulation by c-FLIP"/>
</dbReference>
<dbReference type="Reactome" id="R-HSA-5213460">
    <property type="pathway name" value="RIPK1-mediated regulated necrosis"/>
</dbReference>
<dbReference type="Reactome" id="R-HSA-5218900">
    <property type="pathway name" value="CASP8 activity is inhibited"/>
</dbReference>
<dbReference type="Reactome" id="R-HSA-5357786">
    <property type="pathway name" value="TNFR1-induced proapoptotic signaling"/>
</dbReference>
<dbReference type="Reactome" id="R-HSA-5357905">
    <property type="pathway name" value="Regulation of TNFR1 signaling"/>
</dbReference>
<dbReference type="Reactome" id="R-HSA-5660668">
    <property type="pathway name" value="CLEC7A/inflammasome pathway"/>
</dbReference>
<dbReference type="Reactome" id="R-HSA-5675482">
    <property type="pathway name" value="Regulation of necroptotic cell death"/>
</dbReference>
<dbReference type="Reactome" id="R-HSA-69416">
    <property type="pathway name" value="Dimerization of procaspase-8"/>
</dbReference>
<dbReference type="Reactome" id="R-HSA-75108">
    <property type="pathway name" value="Activation, myristolyation of BID and translocation to mitochondria"/>
</dbReference>
<dbReference type="Reactome" id="R-HSA-75153">
    <property type="pathway name" value="Apoptotic execution phase"/>
</dbReference>
<dbReference type="Reactome" id="R-HSA-75157">
    <property type="pathway name" value="FasL/ CD95L signaling"/>
</dbReference>
<dbReference type="Reactome" id="R-HSA-75158">
    <property type="pathway name" value="TRAIL signaling"/>
</dbReference>
<dbReference type="Reactome" id="R-HSA-9013957">
    <property type="pathway name" value="TLR3-mediated TICAM1-dependent programmed cell death"/>
</dbReference>
<dbReference type="Reactome" id="R-HSA-933543">
    <property type="pathway name" value="NF-kB activation through FADD/RIP-1 pathway mediated by caspase-8 and -10"/>
</dbReference>
<dbReference type="Reactome" id="R-HSA-9686347">
    <property type="pathway name" value="Microbial modulation of RIPK1-mediated regulated necrosis"/>
</dbReference>
<dbReference type="Reactome" id="R-HSA-9693928">
    <property type="pathway name" value="Defective RIPK1-mediated regulated necrosis"/>
</dbReference>
<dbReference type="Reactome" id="R-HSA-9758274">
    <property type="pathway name" value="Regulation of NF-kappa B signaling"/>
</dbReference>
<dbReference type="SignaLink" id="Q14790"/>
<dbReference type="SIGNOR" id="Q14790"/>
<dbReference type="BioGRID-ORCS" id="841">
    <property type="hits" value="22 hits in 1176 CRISPR screens"/>
</dbReference>
<dbReference type="ChiTaRS" id="CASP8">
    <property type="organism name" value="human"/>
</dbReference>
<dbReference type="EvolutionaryTrace" id="Q14790"/>
<dbReference type="GeneWiki" id="Caspase_8"/>
<dbReference type="GenomeRNAi" id="841"/>
<dbReference type="Pharos" id="Q14790">
    <property type="development level" value="Tchem"/>
</dbReference>
<dbReference type="PRO" id="PR:Q14790"/>
<dbReference type="Proteomes" id="UP000005640">
    <property type="component" value="Chromosome 2"/>
</dbReference>
<dbReference type="RNAct" id="Q14790">
    <property type="molecule type" value="protein"/>
</dbReference>
<dbReference type="Bgee" id="ENSG00000064012">
    <property type="expression patterns" value="Expressed in monocyte and 171 other cell types or tissues"/>
</dbReference>
<dbReference type="ExpressionAtlas" id="Q14790">
    <property type="expression patterns" value="baseline and differential"/>
</dbReference>
<dbReference type="GO" id="GO:0031265">
    <property type="term" value="C:CD95 death-inducing signaling complex"/>
    <property type="evidence" value="ECO:0000314"/>
    <property type="project" value="UniProtKB"/>
</dbReference>
<dbReference type="GO" id="GO:0044297">
    <property type="term" value="C:cell body"/>
    <property type="evidence" value="ECO:0007669"/>
    <property type="project" value="Ensembl"/>
</dbReference>
<dbReference type="GO" id="GO:0005737">
    <property type="term" value="C:cytoplasm"/>
    <property type="evidence" value="ECO:0000314"/>
    <property type="project" value="UniProt"/>
</dbReference>
<dbReference type="GO" id="GO:0005856">
    <property type="term" value="C:cytoskeleton"/>
    <property type="evidence" value="ECO:0000304"/>
    <property type="project" value="ProtInc"/>
</dbReference>
<dbReference type="GO" id="GO:0005829">
    <property type="term" value="C:cytosol"/>
    <property type="evidence" value="ECO:0000314"/>
    <property type="project" value="UniProtKB"/>
</dbReference>
<dbReference type="GO" id="GO:0031264">
    <property type="term" value="C:death-inducing signaling complex"/>
    <property type="evidence" value="ECO:0000314"/>
    <property type="project" value="UniProtKB"/>
</dbReference>
<dbReference type="GO" id="GO:0030027">
    <property type="term" value="C:lamellipodium"/>
    <property type="evidence" value="ECO:0000314"/>
    <property type="project" value="UniProtKB"/>
</dbReference>
<dbReference type="GO" id="GO:0005741">
    <property type="term" value="C:mitochondrial outer membrane"/>
    <property type="evidence" value="ECO:0000304"/>
    <property type="project" value="Reactome"/>
</dbReference>
<dbReference type="GO" id="GO:0005739">
    <property type="term" value="C:mitochondrion"/>
    <property type="evidence" value="ECO:0000304"/>
    <property type="project" value="ProtInc"/>
</dbReference>
<dbReference type="GO" id="GO:0005634">
    <property type="term" value="C:nucleus"/>
    <property type="evidence" value="ECO:0007669"/>
    <property type="project" value="UniProtKB-SubCell"/>
</dbReference>
<dbReference type="GO" id="GO:0032991">
    <property type="term" value="C:protein-containing complex"/>
    <property type="evidence" value="ECO:0000314"/>
    <property type="project" value="ARUK-UCL"/>
</dbReference>
<dbReference type="GO" id="GO:0097342">
    <property type="term" value="C:ripoptosome"/>
    <property type="evidence" value="ECO:0000314"/>
    <property type="project" value="UniProtKB"/>
</dbReference>
<dbReference type="GO" id="GO:0004197">
    <property type="term" value="F:cysteine-type endopeptidase activity"/>
    <property type="evidence" value="ECO:0000314"/>
    <property type="project" value="UniProtKB"/>
</dbReference>
<dbReference type="GO" id="GO:0008234">
    <property type="term" value="F:cysteine-type peptidase activity"/>
    <property type="evidence" value="ECO:0000304"/>
    <property type="project" value="ProtInc"/>
</dbReference>
<dbReference type="GO" id="GO:0035877">
    <property type="term" value="F:death effector domain binding"/>
    <property type="evidence" value="ECO:0000353"/>
    <property type="project" value="UniProtKB"/>
</dbReference>
<dbReference type="GO" id="GO:0005123">
    <property type="term" value="F:death receptor binding"/>
    <property type="evidence" value="ECO:0007669"/>
    <property type="project" value="Ensembl"/>
</dbReference>
<dbReference type="GO" id="GO:0042802">
    <property type="term" value="F:identical protein binding"/>
    <property type="evidence" value="ECO:0000353"/>
    <property type="project" value="IntAct"/>
</dbReference>
<dbReference type="GO" id="GO:0008233">
    <property type="term" value="F:peptidase activity"/>
    <property type="evidence" value="ECO:0000314"/>
    <property type="project" value="BHF-UCL"/>
</dbReference>
<dbReference type="GO" id="GO:0044877">
    <property type="term" value="F:protein-containing complex binding"/>
    <property type="evidence" value="ECO:0007669"/>
    <property type="project" value="Ensembl"/>
</dbReference>
<dbReference type="GO" id="GO:0097110">
    <property type="term" value="F:scaffold protein binding"/>
    <property type="evidence" value="ECO:0000353"/>
    <property type="project" value="ParkinsonsUK-UCL"/>
</dbReference>
<dbReference type="GO" id="GO:0005164">
    <property type="term" value="F:tumor necrosis factor receptor binding"/>
    <property type="evidence" value="ECO:0007669"/>
    <property type="project" value="Ensembl"/>
</dbReference>
<dbReference type="GO" id="GO:0031625">
    <property type="term" value="F:ubiquitin protein ligase binding"/>
    <property type="evidence" value="ECO:0000353"/>
    <property type="project" value="UniProtKB"/>
</dbReference>
<dbReference type="GO" id="GO:0001525">
    <property type="term" value="P:angiogenesis"/>
    <property type="evidence" value="ECO:0000250"/>
    <property type="project" value="UniProtKB"/>
</dbReference>
<dbReference type="GO" id="GO:0006915">
    <property type="term" value="P:apoptotic process"/>
    <property type="evidence" value="ECO:0000315"/>
    <property type="project" value="UniProtKB"/>
</dbReference>
<dbReference type="GO" id="GO:0097190">
    <property type="term" value="P:apoptotic signaling pathway"/>
    <property type="evidence" value="ECO:0000315"/>
    <property type="project" value="BHF-UCL"/>
</dbReference>
<dbReference type="GO" id="GO:0042113">
    <property type="term" value="P:B cell activation"/>
    <property type="evidence" value="ECO:0000304"/>
    <property type="project" value="UniProtKB"/>
</dbReference>
<dbReference type="GO" id="GO:0071260">
    <property type="term" value="P:cellular response to mechanical stimulus"/>
    <property type="evidence" value="ECO:0000270"/>
    <property type="project" value="UniProtKB"/>
</dbReference>
<dbReference type="GO" id="GO:0097194">
    <property type="term" value="P:execution phase of apoptosis"/>
    <property type="evidence" value="ECO:0000315"/>
    <property type="project" value="UniProtKB"/>
</dbReference>
<dbReference type="GO" id="GO:0097191">
    <property type="term" value="P:extrinsic apoptotic signaling pathway"/>
    <property type="evidence" value="ECO:0000314"/>
    <property type="project" value="UniProtKB"/>
</dbReference>
<dbReference type="GO" id="GO:0008625">
    <property type="term" value="P:extrinsic apoptotic signaling pathway via death domain receptors"/>
    <property type="evidence" value="ECO:0000314"/>
    <property type="project" value="UniProt"/>
</dbReference>
<dbReference type="GO" id="GO:0007507">
    <property type="term" value="P:heart development"/>
    <property type="evidence" value="ECO:0000250"/>
    <property type="project" value="UniProtKB"/>
</dbReference>
<dbReference type="GO" id="GO:0030225">
    <property type="term" value="P:macrophage differentiation"/>
    <property type="evidence" value="ECO:0000318"/>
    <property type="project" value="GO_Central"/>
</dbReference>
<dbReference type="GO" id="GO:0030101">
    <property type="term" value="P:natural killer cell activation"/>
    <property type="evidence" value="ECO:0000304"/>
    <property type="project" value="UniProtKB"/>
</dbReference>
<dbReference type="GO" id="GO:0043124">
    <property type="term" value="P:negative regulation of canonical NF-kappaB signal transduction"/>
    <property type="evidence" value="ECO:0000315"/>
    <property type="project" value="UniProtKB"/>
</dbReference>
<dbReference type="GO" id="GO:0060546">
    <property type="term" value="P:negative regulation of necroptotic process"/>
    <property type="evidence" value="ECO:0000314"/>
    <property type="project" value="UniProtKB"/>
</dbReference>
<dbReference type="GO" id="GO:0043065">
    <property type="term" value="P:positive regulation of apoptotic process"/>
    <property type="evidence" value="ECO:0000250"/>
    <property type="project" value="UniProtKB"/>
</dbReference>
<dbReference type="GO" id="GO:0043123">
    <property type="term" value="P:positive regulation of canonical NF-kappaB signal transduction"/>
    <property type="evidence" value="ECO:0000315"/>
    <property type="project" value="UniProtKB"/>
</dbReference>
<dbReference type="GO" id="GO:0030335">
    <property type="term" value="P:positive regulation of cell migration"/>
    <property type="evidence" value="ECO:0000314"/>
    <property type="project" value="UniProtKB"/>
</dbReference>
<dbReference type="GO" id="GO:1900119">
    <property type="term" value="P:positive regulation of execution phase of apoptosis"/>
    <property type="evidence" value="ECO:0000314"/>
    <property type="project" value="UniProt"/>
</dbReference>
<dbReference type="GO" id="GO:0032731">
    <property type="term" value="P:positive regulation of interleukin-1 beta production"/>
    <property type="evidence" value="ECO:0000315"/>
    <property type="project" value="ARUK-UCL"/>
</dbReference>
<dbReference type="GO" id="GO:0045651">
    <property type="term" value="P:positive regulation of macrophage differentiation"/>
    <property type="evidence" value="ECO:0000315"/>
    <property type="project" value="UniProtKB"/>
</dbReference>
<dbReference type="GO" id="GO:0043525">
    <property type="term" value="P:positive regulation of neuron apoptotic process"/>
    <property type="evidence" value="ECO:0000318"/>
    <property type="project" value="GO_Central"/>
</dbReference>
<dbReference type="GO" id="GO:0045862">
    <property type="term" value="P:positive regulation of proteolysis"/>
    <property type="evidence" value="ECO:0000314"/>
    <property type="project" value="BHF-UCL"/>
</dbReference>
<dbReference type="GO" id="GO:0051604">
    <property type="term" value="P:protein maturation"/>
    <property type="evidence" value="ECO:0000314"/>
    <property type="project" value="UniProt"/>
</dbReference>
<dbReference type="GO" id="GO:0016485">
    <property type="term" value="P:protein processing"/>
    <property type="evidence" value="ECO:0007669"/>
    <property type="project" value="Ensembl"/>
</dbReference>
<dbReference type="GO" id="GO:0006508">
    <property type="term" value="P:proteolysis"/>
    <property type="evidence" value="ECO:0000314"/>
    <property type="project" value="UniProtKB"/>
</dbReference>
<dbReference type="GO" id="GO:0051603">
    <property type="term" value="P:proteolysis involved in protein catabolic process"/>
    <property type="evidence" value="ECO:0000315"/>
    <property type="project" value="BHF-UCL"/>
</dbReference>
<dbReference type="GO" id="GO:0070269">
    <property type="term" value="P:pyroptotic inflammatory response"/>
    <property type="evidence" value="ECO:0000250"/>
    <property type="project" value="UniProtKB"/>
</dbReference>
<dbReference type="GO" id="GO:0001817">
    <property type="term" value="P:regulation of cytokine production"/>
    <property type="evidence" value="ECO:0000250"/>
    <property type="project" value="UniProtKB"/>
</dbReference>
<dbReference type="GO" id="GO:0045088">
    <property type="term" value="P:regulation of innate immune response"/>
    <property type="evidence" value="ECO:0000250"/>
    <property type="project" value="UniProtKB"/>
</dbReference>
<dbReference type="GO" id="GO:0010803">
    <property type="term" value="P:regulation of tumor necrosis factor-mediated signaling pathway"/>
    <property type="evidence" value="ECO:0000304"/>
    <property type="project" value="Reactome"/>
</dbReference>
<dbReference type="GO" id="GO:0072347">
    <property type="term" value="P:response to anesthetic"/>
    <property type="evidence" value="ECO:0007669"/>
    <property type="project" value="Ensembl"/>
</dbReference>
<dbReference type="GO" id="GO:0032025">
    <property type="term" value="P:response to cobalt ion"/>
    <property type="evidence" value="ECO:0007669"/>
    <property type="project" value="Ensembl"/>
</dbReference>
<dbReference type="GO" id="GO:0032355">
    <property type="term" value="P:response to estradiol"/>
    <property type="evidence" value="ECO:0007669"/>
    <property type="project" value="Ensembl"/>
</dbReference>
<dbReference type="GO" id="GO:0045471">
    <property type="term" value="P:response to ethanol"/>
    <property type="evidence" value="ECO:0007669"/>
    <property type="project" value="Ensembl"/>
</dbReference>
<dbReference type="GO" id="GO:0032496">
    <property type="term" value="P:response to lipopolysaccharide"/>
    <property type="evidence" value="ECO:0007669"/>
    <property type="project" value="Ensembl"/>
</dbReference>
<dbReference type="GO" id="GO:0034612">
    <property type="term" value="P:response to tumor necrosis factor"/>
    <property type="evidence" value="ECO:0000315"/>
    <property type="project" value="BHF-UCL"/>
</dbReference>
<dbReference type="GO" id="GO:0097264">
    <property type="term" value="P:self proteolysis"/>
    <property type="evidence" value="ECO:0000250"/>
    <property type="project" value="UniProtKB"/>
</dbReference>
<dbReference type="GO" id="GO:0060715">
    <property type="term" value="P:syncytiotrophoblast cell differentiation involved in labyrinthine layer development"/>
    <property type="evidence" value="ECO:0000304"/>
    <property type="project" value="UniProtKB"/>
</dbReference>
<dbReference type="GO" id="GO:0042110">
    <property type="term" value="P:T cell activation"/>
    <property type="evidence" value="ECO:0000304"/>
    <property type="project" value="UniProtKB"/>
</dbReference>
<dbReference type="GO" id="GO:0036462">
    <property type="term" value="P:TRAIL-activated apoptotic signaling pathway"/>
    <property type="evidence" value="ECO:0000314"/>
    <property type="project" value="ParkinsonsUK-UCL"/>
</dbReference>
<dbReference type="CDD" id="cd00032">
    <property type="entry name" value="CASc"/>
    <property type="match status" value="1"/>
</dbReference>
<dbReference type="CDD" id="cd08333">
    <property type="entry name" value="DED_Caspase_8_r1"/>
    <property type="match status" value="1"/>
</dbReference>
<dbReference type="FunFam" id="1.10.533.10:FF:000017">
    <property type="entry name" value="caspase-8 isoform X1"/>
    <property type="match status" value="1"/>
</dbReference>
<dbReference type="FunFam" id="1.10.533.10:FF:000021">
    <property type="entry name" value="caspase-8 isoform X1"/>
    <property type="match status" value="1"/>
</dbReference>
<dbReference type="FunFam" id="3.40.50.1460:FF:000008">
    <property type="entry name" value="caspase-8 isoform X1"/>
    <property type="match status" value="1"/>
</dbReference>
<dbReference type="Gene3D" id="3.40.50.1460">
    <property type="match status" value="1"/>
</dbReference>
<dbReference type="Gene3D" id="1.10.533.10">
    <property type="entry name" value="Death Domain, Fas"/>
    <property type="match status" value="2"/>
</dbReference>
<dbReference type="InterPro" id="IPR033170">
    <property type="entry name" value="Caspase-8_DED1"/>
</dbReference>
<dbReference type="InterPro" id="IPR029030">
    <property type="entry name" value="Caspase-like_dom_sf"/>
</dbReference>
<dbReference type="InterPro" id="IPR033139">
    <property type="entry name" value="Caspase_cys_AS"/>
</dbReference>
<dbReference type="InterPro" id="IPR016129">
    <property type="entry name" value="Caspase_his_AS"/>
</dbReference>
<dbReference type="InterPro" id="IPR011029">
    <property type="entry name" value="DEATH-like_dom_sf"/>
</dbReference>
<dbReference type="InterPro" id="IPR001875">
    <property type="entry name" value="DED_dom"/>
</dbReference>
<dbReference type="InterPro" id="IPR011600">
    <property type="entry name" value="Pept_C14_caspase"/>
</dbReference>
<dbReference type="InterPro" id="IPR002138">
    <property type="entry name" value="Pept_C14_p10"/>
</dbReference>
<dbReference type="InterPro" id="IPR001309">
    <property type="entry name" value="Pept_C14_p20"/>
</dbReference>
<dbReference type="InterPro" id="IPR015917">
    <property type="entry name" value="Pept_C14A"/>
</dbReference>
<dbReference type="PANTHER" id="PTHR48169:SF7">
    <property type="entry name" value="CASPASE 10"/>
    <property type="match status" value="1"/>
</dbReference>
<dbReference type="PANTHER" id="PTHR48169">
    <property type="entry name" value="DED DOMAIN-CONTAINING PROTEIN"/>
    <property type="match status" value="1"/>
</dbReference>
<dbReference type="Pfam" id="PF01335">
    <property type="entry name" value="DED"/>
    <property type="match status" value="2"/>
</dbReference>
<dbReference type="Pfam" id="PF00656">
    <property type="entry name" value="Peptidase_C14"/>
    <property type="match status" value="1"/>
</dbReference>
<dbReference type="PRINTS" id="PR00376">
    <property type="entry name" value="IL1BCENZYME"/>
</dbReference>
<dbReference type="SMART" id="SM00115">
    <property type="entry name" value="CASc"/>
    <property type="match status" value="1"/>
</dbReference>
<dbReference type="SMART" id="SM00031">
    <property type="entry name" value="DED"/>
    <property type="match status" value="2"/>
</dbReference>
<dbReference type="SUPFAM" id="SSF52129">
    <property type="entry name" value="Caspase-like"/>
    <property type="match status" value="1"/>
</dbReference>
<dbReference type="SUPFAM" id="SSF47986">
    <property type="entry name" value="DEATH domain"/>
    <property type="match status" value="2"/>
</dbReference>
<dbReference type="PROSITE" id="PS01122">
    <property type="entry name" value="CASPASE_CYS"/>
    <property type="match status" value="1"/>
</dbReference>
<dbReference type="PROSITE" id="PS01121">
    <property type="entry name" value="CASPASE_HIS"/>
    <property type="match status" value="1"/>
</dbReference>
<dbReference type="PROSITE" id="PS50207">
    <property type="entry name" value="CASPASE_P10"/>
    <property type="match status" value="1"/>
</dbReference>
<dbReference type="PROSITE" id="PS50208">
    <property type="entry name" value="CASPASE_P20"/>
    <property type="match status" value="1"/>
</dbReference>
<dbReference type="PROSITE" id="PS50168">
    <property type="entry name" value="DED"/>
    <property type="match status" value="2"/>
</dbReference>
<keyword id="KW-0002">3D-structure</keyword>
<keyword id="KW-0007">Acetylation</keyword>
<keyword id="KW-0025">Alternative splicing</keyword>
<keyword id="KW-0053">Apoptosis</keyword>
<keyword id="KW-0966">Cell projection</keyword>
<keyword id="KW-0963">Cytoplasm</keyword>
<keyword id="KW-0903">Direct protein sequencing</keyword>
<keyword id="KW-0225">Disease variant</keyword>
<keyword id="KW-0945">Host-virus interaction</keyword>
<keyword id="KW-0378">Hydrolase</keyword>
<keyword id="KW-0539">Nucleus</keyword>
<keyword id="KW-0597">Phosphoprotein</keyword>
<keyword id="KW-0645">Protease</keyword>
<keyword id="KW-1267">Proteomics identification</keyword>
<keyword id="KW-1185">Reference proteome</keyword>
<keyword id="KW-0677">Repeat</keyword>
<keyword id="KW-0788">Thiol protease</keyword>
<keyword id="KW-0865">Zymogen</keyword>
<feature type="propeptide" id="PRO_0000004628" evidence="39 41">
    <location>
        <begin position="1"/>
        <end position="216"/>
    </location>
</feature>
<feature type="chain" id="PRO_0000004629" description="Caspase-8 subunit p18">
    <location>
        <begin position="217"/>
        <end position="374"/>
    </location>
</feature>
<feature type="propeptide" id="PRO_0000004630" evidence="39 41">
    <location>
        <begin position="375"/>
        <end position="384"/>
    </location>
</feature>
<feature type="chain" id="PRO_0000004631" description="Caspase-8 subunit p10">
    <location>
        <begin position="385"/>
        <end position="479"/>
    </location>
</feature>
<feature type="domain" description="DED 1" evidence="3">
    <location>
        <begin position="2"/>
        <end position="80"/>
    </location>
</feature>
<feature type="domain" description="DED 2" evidence="3">
    <location>
        <begin position="100"/>
        <end position="177"/>
    </location>
</feature>
<feature type="active site" evidence="6">
    <location>
        <position position="317"/>
    </location>
</feature>
<feature type="active site" evidence="6">
    <location>
        <position position="360"/>
    </location>
</feature>
<feature type="site" description="Cleavage; by autocatalytic cleavage" evidence="39 41">
    <location>
        <begin position="216"/>
        <end position="217"/>
    </location>
</feature>
<feature type="site" description="Cleavage; by CASP6" evidence="25">
    <location>
        <begin position="374"/>
        <end position="375"/>
    </location>
</feature>
<feature type="site" description="Cleavage; by autocatalytic cleavage" evidence="39 41">
    <location>
        <begin position="384"/>
        <end position="385"/>
    </location>
</feature>
<feature type="modified residue" description="Phosphoserine" evidence="1">
    <location>
        <position position="188"/>
    </location>
</feature>
<feature type="modified residue" description="Phosphoserine" evidence="1">
    <location>
        <position position="211"/>
    </location>
</feature>
<feature type="modified residue" description="N6-acetyllysine" evidence="1">
    <location>
        <position position="224"/>
    </location>
</feature>
<feature type="modified residue" description="Phosphotyrosine" evidence="57">
    <location>
        <position position="334"/>
    </location>
</feature>
<feature type="modified residue" description="Phosphotyrosine; by SRC" evidence="17 28">
    <location>
        <position position="380"/>
    </location>
</feature>
<feature type="modified residue" description="Phosphoserine; by CDK1" evidence="24">
    <location>
        <position position="387"/>
    </location>
</feature>
<feature type="modified residue" description="(Microbial infection) ADP-riboxanated arginine" evidence="34 35">
    <location>
        <position position="413"/>
    </location>
</feature>
<feature type="splice variant" id="VSP_000808" description="In isoform 9." evidence="45">
    <original>M</original>
    <variation>MEGGRRARVVIESKRNFFLGAFPTPFPAEHVELGRLGDSETAMVPGKGGADYILLPFKKM</variation>
    <location>
        <position position="1"/>
    </location>
</feature>
<feature type="splice variant" id="VSP_000809" description="In isoform 4." evidence="50">
    <original>R</original>
    <variation>RFHFCRMSWAEANSQCQTQSVPFWRRVDHLLIR</variation>
    <location>
        <position position="102"/>
    </location>
</feature>
<feature type="splice variant" id="VSP_000813" description="In isoform 3." evidence="48">
    <location>
        <begin position="184"/>
        <end position="267"/>
    </location>
</feature>
<feature type="splice variant" id="VSP_000811" description="In isoform 6." evidence="48">
    <original>ERSSSLEGSPDEFSNGEELCGVMTISDSPREQDSESQ</original>
    <variation>DFGQSLPNEKQTSGILSDHQQSQFCKSTGESAQTSQH</variation>
    <location>
        <begin position="184"/>
        <end position="220"/>
    </location>
</feature>
<feature type="splice variant" id="VSP_000810" description="In isoform 2, isoform 4 and isoform 8." evidence="45 48 50 52">
    <location>
        <begin position="184"/>
        <end position="198"/>
    </location>
</feature>
<feature type="splice variant" id="VSP_000814" description="In isoform 5." evidence="48">
    <original>GEELCGVMTISDSPREQDSESQTLDKVYQMKSKPRGY</original>
    <variation>DFGQSLPNEKQTSGILSDHQQSQFCKSTGESAQTSQH</variation>
    <location>
        <begin position="199"/>
        <end position="235"/>
    </location>
</feature>
<feature type="splice variant" id="VSP_000812" description="In isoform 6." evidence="48">
    <location>
        <begin position="221"/>
        <end position="479"/>
    </location>
</feature>
<feature type="splice variant" id="VSP_000815" description="In isoform 5." evidence="48">
    <location>
        <begin position="236"/>
        <end position="479"/>
    </location>
</feature>
<feature type="splice variant" id="VSP_000816" description="In isoform 7 and isoform 8." evidence="46 47 48">
    <original>ALTTTFEE</original>
    <variation>TVEPKREK</variation>
    <location>
        <begin position="269"/>
        <end position="276"/>
    </location>
</feature>
<feature type="splice variant" id="VSP_000817" description="In isoform 7 and isoform 8." evidence="46 47 48">
    <location>
        <begin position="277"/>
        <end position="479"/>
    </location>
</feature>
<feature type="sequence variant" id="VAR_025816" description="In dbSNP:rs35976359." evidence="44">
    <original>S</original>
    <variation>T</variation>
    <location>
        <position position="219"/>
    </location>
</feature>
<feature type="sequence variant" id="VAR_014204" description="In CASP8D; dbSNP:rs17860424." evidence="11">
    <original>R</original>
    <variation>W</variation>
    <location>
        <position position="248"/>
    </location>
</feature>
<feature type="sequence variant" id="VAR_020127" description="Associated with protection against breast cancer; also associated with a lower risk of cutaneous melanoma; dbSNP:rs1045485." evidence="7 15 19 22 38 42 44">
    <original>D</original>
    <variation>H</variation>
    <location>
        <position position="285"/>
    </location>
</feature>
<feature type="mutagenesis site" description="Abolishes binding to FLASH. Induces NF-kappa-B activation." evidence="14">
    <original>D</original>
    <variation>A</variation>
    <location>
        <position position="73"/>
    </location>
</feature>
<feature type="mutagenesis site" description="Does not affect localization to lamellipodia of migrating cells. Prevents DISC-mediated processing of CASP8." evidence="21 28">
    <original>C</original>
    <variation>A</variation>
    <location>
        <position position="360"/>
    </location>
</feature>
<feature type="mutagenesis site" description="Abolishes interaction with UBR2." evidence="29">
    <original>C</original>
    <variation>S</variation>
    <location>
        <position position="360"/>
    </location>
</feature>
<feature type="mutagenesis site" description="Phosphomimetic mutant which does not affect interaction with PIK3R1 or DISC-mediated processing." evidence="28">
    <original>Y</original>
    <variation>E</variation>
    <location>
        <position position="380"/>
    </location>
</feature>
<feature type="mutagenesis site" description="Abolishes phosphorylation at this site. Lack of efficient localization to lamellipodia and lack of promotion of cell migration. Lack of interaction with the SH2 domain of SRC. Lack of interaction with PIK3R1. Impaired DISC-mediated processing." evidence="17 21 28">
    <original>Y</original>
    <variation>F</variation>
    <location>
        <position position="380"/>
    </location>
</feature>
<feature type="mutagenesis site" description="Impaired CDK1-mediated phosphorylation and enhanced apoptosis.">
    <original>S</original>
    <variation>A</variation>
    <location>
        <position position="387"/>
    </location>
</feature>
<feature type="mutagenesis site" description="Abolished ADP-riboxanation by C.violaceum CopC." evidence="35">
    <original>R</original>
    <variation>A</variation>
    <location>
        <position position="413"/>
    </location>
</feature>
<feature type="sequence conflict" description="In Ref. 5; AAD24962." evidence="54" ref="5">
    <original>E</original>
    <variation>D</variation>
    <location>
        <position position="294"/>
    </location>
</feature>
<feature type="sequence conflict" description="In Ref. 2; AAC50602 and 5; AAD24962." evidence="54" ref="2 5">
    <original>A</original>
    <variation>P</variation>
    <location>
        <position position="331"/>
    </location>
</feature>
<feature type="sequence conflict" description="In Ref. 8; AAL87631." evidence="54" ref="8">
    <original>LK</original>
    <variation>FG</variation>
    <location>
        <begin position="343"/>
        <end position="344"/>
    </location>
</feature>
<feature type="helix" evidence="67">
    <location>
        <begin position="3"/>
        <end position="13"/>
    </location>
</feature>
<feature type="helix" evidence="67">
    <location>
        <begin position="16"/>
        <end position="25"/>
    </location>
</feature>
<feature type="turn" evidence="67">
    <location>
        <begin position="26"/>
        <end position="29"/>
    </location>
</feature>
<feature type="helix" evidence="67">
    <location>
        <begin position="32"/>
        <end position="34"/>
    </location>
</feature>
<feature type="turn" evidence="64">
    <location>
        <begin position="35"/>
        <end position="37"/>
    </location>
</feature>
<feature type="helix" evidence="67">
    <location>
        <begin position="41"/>
        <end position="50"/>
    </location>
</feature>
<feature type="strand" evidence="67">
    <location>
        <begin position="53"/>
        <end position="55"/>
    </location>
</feature>
<feature type="helix" evidence="67">
    <location>
        <begin position="60"/>
        <end position="68"/>
    </location>
</feature>
<feature type="helix" evidence="67">
    <location>
        <begin position="72"/>
        <end position="79"/>
    </location>
</feature>
<feature type="helix" evidence="67">
    <location>
        <begin position="83"/>
        <end position="90"/>
    </location>
</feature>
<feature type="turn" evidence="63">
    <location>
        <begin position="93"/>
        <end position="95"/>
    </location>
</feature>
<feature type="helix" evidence="67">
    <location>
        <begin position="100"/>
        <end position="111"/>
    </location>
</feature>
<feature type="helix" evidence="67">
    <location>
        <begin position="114"/>
        <end position="127"/>
    </location>
</feature>
<feature type="strand" evidence="66">
    <location>
        <begin position="129"/>
        <end position="131"/>
    </location>
</feature>
<feature type="helix" evidence="67">
    <location>
        <begin position="139"/>
        <end position="148"/>
    </location>
</feature>
<feature type="strand" evidence="66">
    <location>
        <begin position="151"/>
        <end position="153"/>
    </location>
</feature>
<feature type="helix" evidence="67">
    <location>
        <begin position="158"/>
        <end position="165"/>
    </location>
</feature>
<feature type="helix" evidence="67">
    <location>
        <begin position="169"/>
        <end position="184"/>
    </location>
</feature>
<feature type="strand" evidence="61">
    <location>
        <begin position="230"/>
        <end position="232"/>
    </location>
</feature>
<feature type="strand" evidence="62">
    <location>
        <begin position="235"/>
        <end position="240"/>
    </location>
</feature>
<feature type="helix" evidence="62">
    <location>
        <begin position="245"/>
        <end position="250"/>
    </location>
</feature>
<feature type="helix" evidence="62">
    <location>
        <begin position="252"/>
        <end position="254"/>
    </location>
</feature>
<feature type="strand" evidence="60">
    <location>
        <begin position="255"/>
        <end position="257"/>
    </location>
</feature>
<feature type="helix" evidence="62">
    <location>
        <begin position="263"/>
        <end position="276"/>
    </location>
</feature>
<feature type="strand" evidence="62">
    <location>
        <begin position="280"/>
        <end position="286"/>
    </location>
</feature>
<feature type="helix" evidence="62">
    <location>
        <begin position="289"/>
        <end position="301"/>
    </location>
</feature>
<feature type="helix" evidence="59">
    <location>
        <begin position="304"/>
        <end position="306"/>
    </location>
</feature>
<feature type="strand" evidence="62">
    <location>
        <begin position="310"/>
        <end position="316"/>
    </location>
</feature>
<feature type="strand" evidence="62">
    <location>
        <begin position="322"/>
        <end position="324"/>
    </location>
</feature>
<feature type="strand" evidence="58">
    <location>
        <begin position="326"/>
        <end position="328"/>
    </location>
</feature>
<feature type="strand" evidence="62">
    <location>
        <begin position="330"/>
        <end position="332"/>
    </location>
</feature>
<feature type="helix" evidence="62">
    <location>
        <begin position="333"/>
        <end position="337"/>
    </location>
</feature>
<feature type="helix" evidence="62">
    <location>
        <begin position="338"/>
        <end position="340"/>
    </location>
</feature>
<feature type="turn" evidence="62">
    <location>
        <begin position="342"/>
        <end position="344"/>
    </location>
</feature>
<feature type="helix" evidence="62">
    <location>
        <begin position="346"/>
        <end position="348"/>
    </location>
</feature>
<feature type="strand" evidence="65">
    <location>
        <begin position="349"/>
        <end position="351"/>
    </location>
</feature>
<feature type="strand" evidence="62">
    <location>
        <begin position="353"/>
        <end position="359"/>
    </location>
</feature>
<feature type="strand" evidence="62">
    <location>
        <begin position="361"/>
        <end position="364"/>
    </location>
</feature>
<feature type="strand" evidence="59">
    <location>
        <begin position="369"/>
        <end position="371"/>
    </location>
</feature>
<feature type="strand" evidence="60">
    <location>
        <begin position="377"/>
        <end position="379"/>
    </location>
</feature>
<feature type="strand" evidence="59">
    <location>
        <begin position="392"/>
        <end position="394"/>
    </location>
</feature>
<feature type="turn" evidence="62">
    <location>
        <begin position="395"/>
        <end position="398"/>
    </location>
</feature>
<feature type="strand" evidence="62">
    <location>
        <begin position="399"/>
        <end position="405"/>
    </location>
</feature>
<feature type="strand" evidence="61">
    <location>
        <begin position="412"/>
        <end position="414"/>
    </location>
</feature>
<feature type="turn" evidence="62">
    <location>
        <begin position="415"/>
        <end position="417"/>
    </location>
</feature>
<feature type="helix" evidence="62">
    <location>
        <begin position="420"/>
        <end position="432"/>
    </location>
</feature>
<feature type="helix" evidence="62">
    <location>
        <begin position="433"/>
        <end position="435"/>
    </location>
</feature>
<feature type="helix" evidence="62">
    <location>
        <begin position="439"/>
        <end position="450"/>
    </location>
</feature>
<feature type="turn" evidence="62">
    <location>
        <begin position="456"/>
        <end position="459"/>
    </location>
</feature>
<feature type="strand" evidence="62">
    <location>
        <begin position="465"/>
        <end position="468"/>
    </location>
</feature>
<feature type="strand" evidence="59">
    <location>
        <begin position="471"/>
        <end position="473"/>
    </location>
</feature>
<feature type="sequence conflict" description="In Ref. 8; AAL87628." evidence="54" ref="8">
    <original>K</original>
    <variation>R</variation>
    <location sequence="Q14790-9">
        <position position="14"/>
    </location>
</feature>
<protein>
    <recommendedName>
        <fullName evidence="46">Caspase-8</fullName>
        <shortName evidence="46">CASP-8</shortName>
        <ecNumber evidence="26 32 33 39">3.4.22.61</ecNumber>
    </recommendedName>
    <alternativeName>
        <fullName>Apoptotic cysteine protease</fullName>
    </alternativeName>
    <alternativeName>
        <fullName evidence="51">Apoptotic protease Mch-5</fullName>
    </alternativeName>
    <alternativeName>
        <fullName>CAP4</fullName>
    </alternativeName>
    <alternativeName>
        <fullName evidence="49">FADD-homologous ICE/ced-3-like protease</fullName>
    </alternativeName>
    <alternativeName>
        <fullName evidence="49">FADD-like ICE</fullName>
        <shortName evidence="49">FLICE</shortName>
    </alternativeName>
    <alternativeName>
        <fullName>ICE-like apoptotic protease 5</fullName>
    </alternativeName>
    <alternativeName>
        <fullName evidence="48">MORT1-associated ced-3 homolog</fullName>
        <shortName evidence="48">MACH</shortName>
    </alternativeName>
    <component>
        <recommendedName>
            <fullName evidence="51">Caspase-8 subunit p18</fullName>
        </recommendedName>
    </component>
    <component>
        <recommendedName>
            <fullName evidence="51">Caspase-8 subunit p10</fullName>
        </recommendedName>
    </component>
</protein>
<evidence type="ECO:0000250" key="1">
    <source>
        <dbReference type="UniProtKB" id="O89110"/>
    </source>
</evidence>
<evidence type="ECO:0000250" key="2">
    <source>
        <dbReference type="UniProtKB" id="Q9JHX4"/>
    </source>
</evidence>
<evidence type="ECO:0000255" key="3">
    <source>
        <dbReference type="PROSITE-ProRule" id="PRU00065"/>
    </source>
</evidence>
<evidence type="ECO:0000269" key="4">
    <source>
    </source>
</evidence>
<evidence type="ECO:0000269" key="5">
    <source>
    </source>
</evidence>
<evidence type="ECO:0000269" key="6">
    <source>
    </source>
</evidence>
<evidence type="ECO:0000269" key="7">
    <source>
    </source>
</evidence>
<evidence type="ECO:0000269" key="8">
    <source>
    </source>
</evidence>
<evidence type="ECO:0000269" key="9">
    <source>
    </source>
</evidence>
<evidence type="ECO:0000269" key="10">
    <source>
    </source>
</evidence>
<evidence type="ECO:0000269" key="11">
    <source>
    </source>
</evidence>
<evidence type="ECO:0000269" key="12">
    <source>
    </source>
</evidence>
<evidence type="ECO:0000269" key="13">
    <source>
    </source>
</evidence>
<evidence type="ECO:0000269" key="14">
    <source>
    </source>
</evidence>
<evidence type="ECO:0000269" key="15">
    <source>
    </source>
</evidence>
<evidence type="ECO:0000269" key="16">
    <source>
    </source>
</evidence>
<evidence type="ECO:0000269" key="17">
    <source>
    </source>
</evidence>
<evidence type="ECO:0000269" key="18">
    <source>
    </source>
</evidence>
<evidence type="ECO:0000269" key="19">
    <source>
    </source>
</evidence>
<evidence type="ECO:0000269" key="20">
    <source>
    </source>
</evidence>
<evidence type="ECO:0000269" key="21">
    <source>
    </source>
</evidence>
<evidence type="ECO:0000269" key="22">
    <source>
    </source>
</evidence>
<evidence type="ECO:0000269" key="23">
    <source>
    </source>
</evidence>
<evidence type="ECO:0000269" key="24">
    <source>
    </source>
</evidence>
<evidence type="ECO:0000269" key="25">
    <source>
    </source>
</evidence>
<evidence type="ECO:0000269" key="26">
    <source>
    </source>
</evidence>
<evidence type="ECO:0000269" key="27">
    <source>
    </source>
</evidence>
<evidence type="ECO:0000269" key="28">
    <source>
    </source>
</evidence>
<evidence type="ECO:0000269" key="29">
    <source>
    </source>
</evidence>
<evidence type="ECO:0000269" key="30">
    <source>
    </source>
</evidence>
<evidence type="ECO:0000269" key="31">
    <source>
    </source>
</evidence>
<evidence type="ECO:0000269" key="32">
    <source>
    </source>
</evidence>
<evidence type="ECO:0000269" key="33">
    <source>
    </source>
</evidence>
<evidence type="ECO:0000269" key="34">
    <source>
    </source>
</evidence>
<evidence type="ECO:0000269" key="35">
    <source>
    </source>
</evidence>
<evidence type="ECO:0000269" key="36">
    <source>
    </source>
</evidence>
<evidence type="ECO:0000269" key="37">
    <source>
    </source>
</evidence>
<evidence type="ECO:0000269" key="38">
    <source>
    </source>
</evidence>
<evidence type="ECO:0000269" key="39">
    <source>
    </source>
</evidence>
<evidence type="ECO:0000269" key="40">
    <source>
    </source>
</evidence>
<evidence type="ECO:0000269" key="41">
    <source>
    </source>
</evidence>
<evidence type="ECO:0000269" key="42">
    <source>
    </source>
</evidence>
<evidence type="ECO:0000269" key="43">
    <source>
    </source>
</evidence>
<evidence type="ECO:0000269" key="44">
    <source ref="9"/>
</evidence>
<evidence type="ECO:0000303" key="45">
    <source>
    </source>
</evidence>
<evidence type="ECO:0000303" key="46">
    <source>
    </source>
</evidence>
<evidence type="ECO:0000303" key="47">
    <source>
    </source>
</evidence>
<evidence type="ECO:0000303" key="48">
    <source>
    </source>
</evidence>
<evidence type="ECO:0000303" key="49">
    <source>
    </source>
</evidence>
<evidence type="ECO:0000303" key="50">
    <source>
    </source>
</evidence>
<evidence type="ECO:0000303" key="51">
    <source>
    </source>
</evidence>
<evidence type="ECO:0000303" key="52">
    <source>
    </source>
</evidence>
<evidence type="ECO:0000303" key="53">
    <source>
    </source>
</evidence>
<evidence type="ECO:0000305" key="54"/>
<evidence type="ECO:0000305" key="55">
    <source>
    </source>
</evidence>
<evidence type="ECO:0000312" key="56">
    <source>
        <dbReference type="HGNC" id="HGNC:1509"/>
    </source>
</evidence>
<evidence type="ECO:0007744" key="57">
    <source>
    </source>
</evidence>
<evidence type="ECO:0007829" key="58">
    <source>
        <dbReference type="PDB" id="1I4E"/>
    </source>
</evidence>
<evidence type="ECO:0007829" key="59">
    <source>
        <dbReference type="PDB" id="1QDU"/>
    </source>
</evidence>
<evidence type="ECO:0007829" key="60">
    <source>
        <dbReference type="PDB" id="2K7Z"/>
    </source>
</evidence>
<evidence type="ECO:0007829" key="61">
    <source>
        <dbReference type="PDB" id="3H11"/>
    </source>
</evidence>
<evidence type="ECO:0007829" key="62">
    <source>
        <dbReference type="PDB" id="4JJ7"/>
    </source>
</evidence>
<evidence type="ECO:0007829" key="63">
    <source>
        <dbReference type="PDB" id="4ZBW"/>
    </source>
</evidence>
<evidence type="ECO:0007829" key="64">
    <source>
        <dbReference type="PDB" id="5H31"/>
    </source>
</evidence>
<evidence type="ECO:0007829" key="65">
    <source>
        <dbReference type="PDB" id="6PX9"/>
    </source>
</evidence>
<evidence type="ECO:0007829" key="66">
    <source>
        <dbReference type="PDB" id="7LVJ"/>
    </source>
</evidence>
<evidence type="ECO:0007829" key="67">
    <source>
        <dbReference type="PDB" id="7LVM"/>
    </source>
</evidence>
<reference key="1">
    <citation type="journal article" date="1996" name="Cell">
        <title>Involvement of MACH, a novel MORT1/FADD-interacting protease, in Fas/APO-1- and TNF receptor-induced cell death.</title>
        <authorList>
            <person name="Boldin M.P."/>
            <person name="Goncharov T.M."/>
            <person name="Goltsev Y.V."/>
            <person name="Wallach D."/>
        </authorList>
    </citation>
    <scope>NUCLEOTIDE SEQUENCE [MRNA] (ISOFORMS 1; 2; 3; 5; 6; 7 AND 8)</scope>
    <scope>FUNCTION</scope>
    <scope>INTERACTION WITH FADD</scope>
    <scope>TISSUE SPECIFICITY</scope>
    <source>
        <tissue>B-cell</tissue>
        <tissue>Thymus</tissue>
    </source>
</reference>
<reference key="2">
    <citation type="journal article" date="1996" name="Cell">
        <title>FLICE, a novel FADD-homologous ICE/CED-3-like protease, is recruited to the CD95 (Fas/APO-1) death-inducing signaling complex.</title>
        <authorList>
            <person name="Muzio M."/>
            <person name="Chinnaiyan A.M."/>
            <person name="Kischkel F.C."/>
            <person name="O'Rourke K."/>
            <person name="Shevchenko A."/>
            <person name="Ni J."/>
            <person name="Scaffidi C."/>
            <person name="Bretz J.D."/>
            <person name="Zhang M."/>
            <person name="Gentz R."/>
            <person name="Mann M."/>
            <person name="Krammer P.H."/>
            <person name="Peter M.E."/>
            <person name="Dixit V.M."/>
        </authorList>
    </citation>
    <scope>NUCLEOTIDE SEQUENCE [MRNA] (ISOFORM 1)</scope>
    <scope>PARTIAL PROTEIN SEQUENCE</scope>
    <scope>FUNCTION</scope>
    <scope>IDENTIFICATION IN DISC COMPLEX</scope>
</reference>
<reference key="3">
    <citation type="journal article" date="1996" name="Proc. Natl. Acad. Sci. U.S.A.">
        <title>In vitro activation of CPP32 and Mch3 by Mch4, a novel human apoptotic cysteine protease containing two FADD-like domains.</title>
        <authorList>
            <person name="Fernandes-Alnemri T."/>
            <person name="Armstrong R.C."/>
            <person name="Krebs J.F."/>
            <person name="Srinivasula S.M."/>
            <person name="Wang L."/>
            <person name="Bullrich F."/>
            <person name="Fritz L.C."/>
            <person name="Trapani J.A."/>
            <person name="Tomaselli K.J."/>
            <person name="Litwack G."/>
            <person name="Alnemri E.S."/>
        </authorList>
    </citation>
    <scope>NUCLEOTIDE SEQUENCE [MRNA] (ISOFORM 4)</scope>
    <scope>FUNCTION</scope>
    <scope>VARIANT HIS-285</scope>
    <source>
        <tissue>T-cell</tissue>
    </source>
</reference>
<reference key="4">
    <citation type="journal article" date="1997" name="J. Biol. Chem.">
        <title>FLAME-1, a novel FADD-like anti-apoptotic molecule that regulates Fas/TNFR1-induced apoptosis.</title>
        <authorList>
            <person name="Srinivasula S.M."/>
            <person name="Ahmad M."/>
            <person name="Ottilie S."/>
            <person name="Bullrich F."/>
            <person name="Banks S."/>
            <person name="Wang Y."/>
            <person name="Fernandes-Alnemri T."/>
            <person name="Croce C.M."/>
            <person name="Litwack G."/>
            <person name="Tomaselli K.J."/>
            <person name="Armstrong R.C."/>
            <person name="Alnemri E.S."/>
        </authorList>
    </citation>
    <scope>NUCLEOTIDE SEQUENCE [MRNA] (ISOFORM 2)</scope>
    <scope>VARIANT HIS-285</scope>
</reference>
<reference key="5">
    <citation type="journal article" date="1999" name="Gene">
        <title>Structure and chromosome localization of the human CASP8 gene.</title>
        <authorList>
            <person name="Grenet J."/>
            <person name="Teitz T."/>
            <person name="Wei T."/>
            <person name="Valentine V."/>
            <person name="Kidd V.J."/>
        </authorList>
    </citation>
    <scope>NUCLEOTIDE SEQUENCE [GENOMIC DNA]</scope>
</reference>
<reference key="6">
    <citation type="journal article" date="2001" name="Genomics">
        <title>Cloning and characterization of three novel genes, ALS2CR1, ALS2CR2, and ALS2CR3, in the juvenile amyotrophic lateral sclerosis (ALS2) critical region at chromosome 2q33-q34: candidate genes for ALS2.</title>
        <authorList>
            <person name="Hadano S."/>
            <person name="Yanagisawa Y."/>
            <person name="Skaug J."/>
            <person name="Fichter K."/>
            <person name="Nasir J."/>
            <person name="Martindale D."/>
            <person name="Koop B.F."/>
            <person name="Scherer S.W."/>
            <person name="Nicholson D.W."/>
            <person name="Rouleau G.A."/>
            <person name="Ikeda J.-E."/>
            <person name="Hayden M.R."/>
        </authorList>
    </citation>
    <scope>NUCLEOTIDE SEQUENCE [GENOMIC DNA]</scope>
    <scope>VARIANT HIS-285</scope>
</reference>
<reference key="7">
    <citation type="journal article" date="2002" name="Blood">
        <title>Characterization of caspase-8L: a novel isoform of caspase-8 that behaves as an inhibitor of the caspase cascade.</title>
        <authorList>
            <person name="Himeji D."/>
            <person name="Horiuchi T."/>
            <person name="Tsukamoto H."/>
            <person name="Hayashi K."/>
            <person name="Watanabe T."/>
            <person name="Harada M."/>
        </authorList>
    </citation>
    <scope>NUCLEOTIDE SEQUENCE [MRNA] (ISOFORM 7)</scope>
    <scope>FUNCTION (ISOFORM 7)</scope>
    <source>
        <tissue>Leukocyte</tissue>
    </source>
</reference>
<reference key="8">
    <citation type="journal article" date="2002" name="Proc. Natl. Acad. Sci. U.S.A.">
        <title>The procaspase-8 isoform, procaspase-8L, recruited to the BAP31 complex at the endoplasmic reticulum.</title>
        <authorList>
            <person name="Breckenridge D.G."/>
            <person name="Nguyen M."/>
            <person name="Kuppig S."/>
            <person name="Reth M."/>
            <person name="Shore G.C."/>
        </authorList>
    </citation>
    <scope>NUCLEOTIDE SEQUENCE [MRNA] (ISOFORMS 1; 2 AND 9)</scope>
    <scope>INTERACTION OF ISOFORM 9 WITH BCAP31 AT THE ENDOPLASMIC RETICULUM</scope>
</reference>
<reference key="9">
    <citation type="submission" date="2006-01" db="EMBL/GenBank/DDBJ databases">
        <authorList>
            <consortium name="NIEHS SNPs program"/>
        </authorList>
    </citation>
    <scope>NUCLEOTIDE SEQUENCE [GENOMIC DNA]</scope>
    <scope>VARIANTS THR-219 AND HIS-285</scope>
</reference>
<reference key="10">
    <citation type="journal article" date="2005" name="Nature">
        <title>Generation and annotation of the DNA sequences of human chromosomes 2 and 4.</title>
        <authorList>
            <person name="Hillier L.W."/>
            <person name="Graves T.A."/>
            <person name="Fulton R.S."/>
            <person name="Fulton L.A."/>
            <person name="Pepin K.H."/>
            <person name="Minx P."/>
            <person name="Wagner-McPherson C."/>
            <person name="Layman D."/>
            <person name="Wylie K."/>
            <person name="Sekhon M."/>
            <person name="Becker M.C."/>
            <person name="Fewell G.A."/>
            <person name="Delehaunty K.D."/>
            <person name="Miner T.L."/>
            <person name="Nash W.E."/>
            <person name="Kremitzki C."/>
            <person name="Oddy L."/>
            <person name="Du H."/>
            <person name="Sun H."/>
            <person name="Bradshaw-Cordum H."/>
            <person name="Ali J."/>
            <person name="Carter J."/>
            <person name="Cordes M."/>
            <person name="Harris A."/>
            <person name="Isak A."/>
            <person name="van Brunt A."/>
            <person name="Nguyen C."/>
            <person name="Du F."/>
            <person name="Courtney L."/>
            <person name="Kalicki J."/>
            <person name="Ozersky P."/>
            <person name="Abbott S."/>
            <person name="Armstrong J."/>
            <person name="Belter E.A."/>
            <person name="Caruso L."/>
            <person name="Cedroni M."/>
            <person name="Cotton M."/>
            <person name="Davidson T."/>
            <person name="Desai A."/>
            <person name="Elliott G."/>
            <person name="Erb T."/>
            <person name="Fronick C."/>
            <person name="Gaige T."/>
            <person name="Haakenson W."/>
            <person name="Haglund K."/>
            <person name="Holmes A."/>
            <person name="Harkins R."/>
            <person name="Kim K."/>
            <person name="Kruchowski S.S."/>
            <person name="Strong C.M."/>
            <person name="Grewal N."/>
            <person name="Goyea E."/>
            <person name="Hou S."/>
            <person name="Levy A."/>
            <person name="Martinka S."/>
            <person name="Mead K."/>
            <person name="McLellan M.D."/>
            <person name="Meyer R."/>
            <person name="Randall-Maher J."/>
            <person name="Tomlinson C."/>
            <person name="Dauphin-Kohlberg S."/>
            <person name="Kozlowicz-Reilly A."/>
            <person name="Shah N."/>
            <person name="Swearengen-Shahid S."/>
            <person name="Snider J."/>
            <person name="Strong J.T."/>
            <person name="Thompson J."/>
            <person name="Yoakum M."/>
            <person name="Leonard S."/>
            <person name="Pearman C."/>
            <person name="Trani L."/>
            <person name="Radionenko M."/>
            <person name="Waligorski J.E."/>
            <person name="Wang C."/>
            <person name="Rock S.M."/>
            <person name="Tin-Wollam A.-M."/>
            <person name="Maupin R."/>
            <person name="Latreille P."/>
            <person name="Wendl M.C."/>
            <person name="Yang S.-P."/>
            <person name="Pohl C."/>
            <person name="Wallis J.W."/>
            <person name="Spieth J."/>
            <person name="Bieri T.A."/>
            <person name="Berkowicz N."/>
            <person name="Nelson J.O."/>
            <person name="Osborne J."/>
            <person name="Ding L."/>
            <person name="Meyer R."/>
            <person name="Sabo A."/>
            <person name="Shotland Y."/>
            <person name="Sinha P."/>
            <person name="Wohldmann P.E."/>
            <person name="Cook L.L."/>
            <person name="Hickenbotham M.T."/>
            <person name="Eldred J."/>
            <person name="Williams D."/>
            <person name="Jones T.A."/>
            <person name="She X."/>
            <person name="Ciccarelli F.D."/>
            <person name="Izaurralde E."/>
            <person name="Taylor J."/>
            <person name="Schmutz J."/>
            <person name="Myers R.M."/>
            <person name="Cox D.R."/>
            <person name="Huang X."/>
            <person name="McPherson J.D."/>
            <person name="Mardis E.R."/>
            <person name="Clifton S.W."/>
            <person name="Warren W.C."/>
            <person name="Chinwalla A.T."/>
            <person name="Eddy S.R."/>
            <person name="Marra M.A."/>
            <person name="Ovcharenko I."/>
            <person name="Furey T.S."/>
            <person name="Miller W."/>
            <person name="Eichler E.E."/>
            <person name="Bork P."/>
            <person name="Suyama M."/>
            <person name="Torrents D."/>
            <person name="Waterston R.H."/>
            <person name="Wilson R.K."/>
        </authorList>
    </citation>
    <scope>NUCLEOTIDE SEQUENCE [LARGE SCALE GENOMIC DNA]</scope>
</reference>
<reference key="11">
    <citation type="journal article" date="2004" name="Genome Res.">
        <title>The status, quality, and expansion of the NIH full-length cDNA project: the Mammalian Gene Collection (MGC).</title>
        <authorList>
            <consortium name="The MGC Project Team"/>
        </authorList>
    </citation>
    <scope>NUCLEOTIDE SEQUENCE [LARGE SCALE MRNA] (ISOFORM 7)</scope>
    <source>
        <tissue>Leukocyte</tissue>
    </source>
</reference>
<reference key="12">
    <citation type="journal article" date="1996" name="Proc. Natl. Acad. Sci. U.S.A.">
        <title>Molecular ordering of the Fas-apoptotic pathway: the Fas/APO-1 protease Mch5 is a CrmA-inhibitable protease that activates multiple Ced-3/ICE-like cysteine proteases.</title>
        <authorList>
            <person name="Srinivasula S.M."/>
            <person name="Ahmad M."/>
            <person name="Fernandes-Alnemri T."/>
            <person name="Litwack G."/>
            <person name="Alnemri E.S."/>
        </authorList>
    </citation>
    <scope>PARTIAL PROTEIN SEQUENCE</scope>
    <scope>FUNCTION</scope>
    <scope>PROTEOLYTIC PROCESSING</scope>
    <scope>SITE</scope>
</reference>
<reference key="13">
    <citation type="journal article" date="1997" name="J. Biol. Chem.">
        <title>FLICE induced apoptosis in a cell-free system. Cleavage of caspase zymogens.</title>
        <authorList>
            <person name="Muzio M."/>
            <person name="Salvesen G.S."/>
            <person name="Dixit V.M."/>
        </authorList>
    </citation>
    <scope>FUNCTION</scope>
</reference>
<reference key="14">
    <citation type="journal article" date="1997" name="EMBO J.">
        <title>FLICE is activated by association with the CD95 death-inducing signaling complex (DISC).</title>
        <authorList>
            <person name="Medema J.P."/>
            <person name="Scaffidi C."/>
            <person name="Kischkel F.C."/>
            <person name="Shevchenko A."/>
            <person name="Mann M."/>
            <person name="Krammer P.H."/>
            <person name="Peter M.E."/>
        </authorList>
    </citation>
    <scope>FUNCTION</scope>
    <scope>IDENTIFICATION IN DISC COMPLEX</scope>
    <scope>PROTEOLYTIC PROCESSING</scope>
    <scope>CLEAVAGE SITES</scope>
</reference>
<reference key="15">
    <citation type="journal article" date="2000" name="Biochem. Biophys. Res. Commun.">
        <title>Dominant expression of a novel splice variant of caspase-8 in human peripheral blood lymphocytes.</title>
        <authorList>
            <person name="Horiuchi T."/>
            <person name="Himeji D."/>
            <person name="Tsukamoto H."/>
            <person name="Harashima S."/>
            <person name="Hashimura C."/>
            <person name="Hayashi K."/>
        </authorList>
    </citation>
    <scope>CHARACTERIZATION (ISOFORM 7)</scope>
</reference>
<reference key="16">
    <citation type="journal article" date="1997" name="J. Cell Biol.">
        <title>p28 Bap31, a Bcl-2/Bcl-XL- and procaspase-8-associated protein in the endoplasmic reticulum.</title>
        <authorList>
            <person name="Ng F.W.H."/>
            <person name="Nguyen M."/>
            <person name="Kwan T."/>
            <person name="Branton P.E."/>
            <person name="Nicholson D.W."/>
            <person name="Cromlish J.A."/>
            <person name="Shore G.C."/>
        </authorList>
    </citation>
    <scope>INTERACTION WITH BCL2; BCL2L1 AND BCAP31</scope>
</reference>
<reference key="17">
    <citation type="journal article" date="1999" name="Oncogene">
        <title>PED/PEA-15: an anti-apoptotic molecule that regulates FAS/TNFR1-induced apoptosis.</title>
        <authorList>
            <person name="Condorelli G."/>
            <person name="Vigliotta G."/>
            <person name="Cafieri A."/>
            <person name="Trencia A."/>
            <person name="Andalo P."/>
            <person name="Oriente F."/>
            <person name="Miele C."/>
            <person name="Caruso M."/>
            <person name="Formisano P."/>
            <person name="Beguinot F."/>
        </authorList>
    </citation>
    <scope>INTERACTION WITH PEA15</scope>
</reference>
<reference key="18">
    <citation type="journal article" date="2001" name="Proc. Natl. Acad. Sci. U.S.A.">
        <title>A cytomegalovirus-encoded inhibitor of apoptosis that suppresses caspase-8 activation.</title>
        <authorList>
            <person name="Skaletskaya A."/>
            <person name="Bartle L.M."/>
            <person name="Chittenden T."/>
            <person name="McCormick A.L."/>
            <person name="Mocarski E.S."/>
            <person name="Goldmacher V.S."/>
        </authorList>
    </citation>
    <scope>INTERACTION WITH HUMAN CYTOMEGALOVIRUS/HHV-5 PROTEIN UL36 (MICROBIAL INFECTION)</scope>
</reference>
<reference key="19">
    <citation type="journal article" date="2004" name="Genome Biol.">
        <title>An unappreciated role for RNA surveillance.</title>
        <authorList>
            <person name="Hillman R.T."/>
            <person name="Green R.E."/>
            <person name="Brenner S.E."/>
        </authorList>
    </citation>
    <scope>SPLICE ISOFORM(S) THAT ARE POTENTIAL NMD TARGET(S)</scope>
</reference>
<reference key="20">
    <citation type="journal article" date="2004" name="Mol. Cell. Biol.">
        <title>Calcium binding of ARC mediates regulation of caspase 8 and cell death.</title>
        <authorList>
            <person name="Jo D.G."/>
            <person name="Jun J.I."/>
            <person name="Chang J.W."/>
            <person name="Hong Y.M."/>
            <person name="Song S."/>
            <person name="Cho D.H."/>
            <person name="Shim S.M."/>
            <person name="Lee H.J."/>
            <person name="Cho C."/>
            <person name="Kim D.H."/>
            <person name="Jung Y.K."/>
        </authorList>
    </citation>
    <scope>INTERACTION WITH NOL3</scope>
</reference>
<reference key="21">
    <citation type="journal article" date="2004" name="Proc. Natl. Acad. Sci. U.S.A.">
        <title>Suppression of caspase-8- and -10-associated RING proteins results in sensitization to death ligands and inhibition of tumor cell growth.</title>
        <authorList>
            <person name="McDonald E.R. III"/>
            <person name="El-Deiry W.S."/>
        </authorList>
    </citation>
    <scope>INTERACTION WITH RFFL AND RNF34</scope>
</reference>
<reference key="22">
    <citation type="journal article" date="2005" name="Nat. Biotechnol.">
        <title>Immunoaffinity profiling of tyrosine phosphorylation in cancer cells.</title>
        <authorList>
            <person name="Rush J."/>
            <person name="Moritz A."/>
            <person name="Lee K.A."/>
            <person name="Guo A."/>
            <person name="Goss V.L."/>
            <person name="Spek E.J."/>
            <person name="Zhang H."/>
            <person name="Zha X.-M."/>
            <person name="Polakiewicz R.D."/>
            <person name="Comb M.J."/>
        </authorList>
    </citation>
    <scope>PHOSPHORYLATION [LARGE SCALE ANALYSIS] AT TYR-334</scope>
    <scope>IDENTIFICATION BY MASS SPECTROMETRY [LARGE SCALE ANALYSIS]</scope>
</reference>
<reference key="23">
    <citation type="journal article" date="2005" name="Oncogene">
        <title>Role of FLASH in caspase-8-mediated activation of NF-kappaB: dominant-negative function of FLASH mutant in NF-kappaB signaling pathway.</title>
        <authorList>
            <person name="Jun J.-I."/>
            <person name="Chung C.-W."/>
            <person name="Lee H.-J."/>
            <person name="Pyo J.-O."/>
            <person name="Lee K.N."/>
            <person name="Kim N.-S."/>
            <person name="Kim Y.S."/>
            <person name="Yoo H.-S."/>
            <person name="Lee T.-H."/>
            <person name="Kim E."/>
            <person name="Jung Y.-K."/>
        </authorList>
    </citation>
    <scope>MUTAGENESIS OF ASP-73</scope>
</reference>
<reference key="24">
    <citation type="journal article" date="2006" name="EMBO J.">
        <title>Src kinase phosphorylates Caspase-8 on Tyr380: a novel mechanism of apoptosis suppression.</title>
        <authorList>
            <person name="Cursi S."/>
            <person name="Rufini A."/>
            <person name="Stagni V."/>
            <person name="Condo I."/>
            <person name="Matafora V."/>
            <person name="Bachi A."/>
            <person name="Bonifazi A.P."/>
            <person name="Coppola L."/>
            <person name="Superti-Furga G."/>
            <person name="Testi R."/>
            <person name="Barila D."/>
        </authorList>
    </citation>
    <scope>PHOSPHORYLATION AT TYR-380</scope>
    <scope>MUTAGENESIS OF TYR-380</scope>
</reference>
<reference key="25">
    <citation type="journal article" date="2006" name="J. Virol.">
        <title>The MC160 protein expressed by the dermatotropic poxvirus molluscum contagiosum virus prevents tumor necrosis factor alpha-induced NF-kappaB activation via inhibition of I kappa kinase complex formation.</title>
        <authorList>
            <person name="Nichols D.B."/>
            <person name="Shisler J.L."/>
        </authorList>
    </citation>
    <scope>INTERACTION WITH MOLLUSCUM CONTAGIOSUM VIRUS PROTEIN MC160 (MICROBIAL INFECTION)</scope>
</reference>
<reference key="26">
    <citation type="journal article" date="2006" name="Mol. Cell">
        <title>Engineered hybrid dimers: tracking the activation pathway of caspase-7.</title>
        <authorList>
            <person name="Denault J.B."/>
            <person name="Bekes M."/>
            <person name="Scott F.L."/>
            <person name="Sexton K.M."/>
            <person name="Bogyo M."/>
            <person name="Salvesen G.S."/>
        </authorList>
    </citation>
    <scope>FUNCTION</scope>
    <scope>CATALYTIC ACTIVITY</scope>
</reference>
<reference key="27">
    <citation type="journal article" date="2007" name="EMBO J.">
        <title>FLASH links the CD95 signaling pathway to the cell nucleus and nuclear bodies.</title>
        <authorList>
            <person name="Milovic-Holm K."/>
            <person name="Krieghoff E."/>
            <person name="Jensen K."/>
            <person name="Will H."/>
            <person name="Hofmann T.G."/>
        </authorList>
    </citation>
    <scope>INTERACTION WITH CASP8P2</scope>
</reference>
<reference key="28">
    <citation type="journal article" date="2008" name="Cell Death Differ.">
        <title>Identification of an antiapoptotic protein complex at death receptors.</title>
        <authorList>
            <person name="Sun M."/>
            <person name="Song L."/>
            <person name="Li Y."/>
            <person name="Zhou T."/>
            <person name="Jope R.S."/>
        </authorList>
    </citation>
    <scope>INTERACTION WITH TNFRSF10B</scope>
</reference>
<reference key="29">
    <citation type="journal article" date="2008" name="J. Biol. Chem.">
        <title>Identification of a critical tyrosine residue in caspase 8 that promotes cell migration.</title>
        <authorList>
            <person name="Barbero S."/>
            <person name="Barila D."/>
            <person name="Mielgo A."/>
            <person name="Stagni V."/>
            <person name="Clair K."/>
            <person name="Stupack D."/>
        </authorList>
    </citation>
    <scope>FUNCTION</scope>
    <scope>SUBCELLULAR LOCATION</scope>
    <scope>DOMAIN</scope>
    <scope>PHOSPHORYLATION AT TYR-380</scope>
    <scope>MUTAGENESIS OF CYS-360 AND TYR-380</scope>
</reference>
<reference key="30">
    <citation type="journal article" date="2010" name="Mol. Cell. Biol.">
        <title>Cdk1/cyclin B1 controls Fas-mediated apoptosis by regulating caspase-8 activity.</title>
        <authorList>
            <person name="Matthess Y."/>
            <person name="Raab M."/>
            <person name="Sanhaji M."/>
            <person name="Lavrik I.N."/>
            <person name="Strebhardt K."/>
        </authorList>
    </citation>
    <scope>PHOSPHORYLATION AT SER-387 BY CDK1</scope>
</reference>
<reference key="31">
    <citation type="journal article" date="2011" name="BMC Syst. Biol.">
        <title>Initial characterization of the human central proteome.</title>
        <authorList>
            <person name="Burkard T.R."/>
            <person name="Planyavsky M."/>
            <person name="Kaupe I."/>
            <person name="Breitwieser F.P."/>
            <person name="Buerckstuemmer T."/>
            <person name="Bennett K.L."/>
            <person name="Superti-Furga G."/>
            <person name="Colinge J."/>
        </authorList>
    </citation>
    <scope>IDENTIFICATION BY MASS SPECTROMETRY [LARGE SCALE ANALYSIS]</scope>
</reference>
<reference key="32">
    <citation type="journal article" date="2013" name="Cell Death Differ.">
        <title>Intrinsic cleavage of receptor-interacting protein kinase-1 by caspase-6.</title>
        <authorList>
            <person name="van Raam B.J."/>
            <person name="Ehrnhoefer D.E."/>
            <person name="Hayden M.R."/>
            <person name="Salvesen G.S."/>
        </authorList>
    </citation>
    <scope>PROTEOLYTIC CLEAVAGE</scope>
</reference>
<reference key="33">
    <citation type="journal article" date="2013" name="PLoS ONE">
        <title>The E. coli effector protein NleF is a caspase inhibitor.</title>
        <authorList>
            <person name="Blasche S."/>
            <person name="Mortl M."/>
            <person name="Steuber H."/>
            <person name="Siszler G."/>
            <person name="Nisa S."/>
            <person name="Schwarz F."/>
            <person name="Lavrik I."/>
            <person name="Gronewold T.M."/>
            <person name="Maskos K."/>
            <person name="Donnenberg M.S."/>
            <person name="Ullmann D."/>
            <person name="Uetz P."/>
            <person name="Kogl M."/>
        </authorList>
    </citation>
    <scope>INTERACTION WITH E.COLI NLEF (MICROBIAL INFECTION)</scope>
    <scope>CATALYTIC ACTIVITY</scope>
    <scope>FUNCTION</scope>
    <scope>ACTIVITY REGULATION</scope>
</reference>
<reference key="34">
    <citation type="journal article" date="2015" name="Cell Host Microbe">
        <title>Herpes simplex virus suppresses necroptosis in human cells.</title>
        <authorList>
            <person name="Guo H."/>
            <person name="Omoto S."/>
            <person name="Harris P.A."/>
            <person name="Finger J.N."/>
            <person name="Bertin J."/>
            <person name="Gough P.J."/>
            <person name="Kaiser W.J."/>
            <person name="Mocarski E.S."/>
        </authorList>
    </citation>
    <scope>INTERACTION WITH HERPES SIMPLEX VIRUS 1 AND 2 PROTEIN RIR1 (MICROBIAL INFECTION)</scope>
</reference>
<reference key="35">
    <citation type="journal article" date="2016" name="Oncogene">
        <title>Caspase-8 tyrosine-380 phosphorylation inhibits CD95 DISC function by preventing procaspase-8 maturation and cycling within the complex.</title>
        <authorList>
            <person name="Powley I.R."/>
            <person name="Hughes M.A."/>
            <person name="Cain K."/>
            <person name="MacFarlane M."/>
        </authorList>
    </citation>
    <scope>FUNCTION</scope>
    <scope>INTERACTION WITH PIK3R1</scope>
    <scope>PHOSPHORYLATION AT TYR-380</scope>
    <scope>MUTAGENESIS OF CYS-360 AND TYR-380</scope>
</reference>
<reference key="36">
    <citation type="journal article" date="2017" name="Dev. Cell">
        <title>Coupled Caspase and N-End Rule Ligase Activities Allow Recognition and Degradation of Pluripotency Factor LIN-28 during Non-Apoptotic Development.</title>
        <authorList>
            <person name="Weaver B.P."/>
            <person name="Weaver Y.M."/>
            <person name="Mitani S."/>
            <person name="Han M."/>
        </authorList>
    </citation>
    <scope>INTERACTION WITH UBR2</scope>
    <scope>MUTAGENESIS OF CYS-360</scope>
</reference>
<reference key="37">
    <citation type="journal article" date="2020" name="Nature">
        <title>Mutations that prevent caspase cleavage of RIPK1 cause autoinflammatory disease.</title>
        <authorList>
            <person name="Lalaoui N."/>
            <person name="Boyden S.E."/>
            <person name="Oda H."/>
            <person name="Wood G.M."/>
            <person name="Stone D.L."/>
            <person name="Chau D."/>
            <person name="Liu L."/>
            <person name="Stoffels M."/>
            <person name="Kratina T."/>
            <person name="Lawlor K.E."/>
            <person name="Zaal K.J.M."/>
            <person name="Hoffmann P.M."/>
            <person name="Etemadi N."/>
            <person name="Shield-Artin K."/>
            <person name="Biben C."/>
            <person name="Tsai W.L."/>
            <person name="Blake M.D."/>
            <person name="Kuehn H.S."/>
            <person name="Yang D."/>
            <person name="Anderton H."/>
            <person name="Silke N."/>
            <person name="Wachsmuth L."/>
            <person name="Zheng L."/>
            <person name="Moura N.S."/>
            <person name="Beck D.B."/>
            <person name="Gutierrez-Cruz G."/>
            <person name="Ombrello A.K."/>
            <person name="Pinto-Patarroyo G.P."/>
            <person name="Kueh A.J."/>
            <person name="Herold M.J."/>
            <person name="Hall C."/>
            <person name="Wang H."/>
            <person name="Chae J.J."/>
            <person name="Dmitrieva N.I."/>
            <person name="McKenzie M."/>
            <person name="Light A."/>
            <person name="Barham B.K."/>
            <person name="Jones A."/>
            <person name="Romeo T.M."/>
            <person name="Zhou Q."/>
            <person name="Aksentijevich I."/>
            <person name="Mullikin J.C."/>
            <person name="Gross A.J."/>
            <person name="Shum A.K."/>
            <person name="Hawkins E.D."/>
            <person name="Masters S.L."/>
            <person name="Lenardo M.J."/>
            <person name="Boehm M."/>
            <person name="Rosenzweig S.D."/>
            <person name="Pasparakis M."/>
            <person name="Voss A.K."/>
            <person name="Gadina M."/>
            <person name="Kastner D.L."/>
            <person name="Silke J."/>
        </authorList>
    </citation>
    <scope>FUNCTION</scope>
</reference>
<reference key="38">
    <citation type="journal article" date="2020" name="Nature">
        <title>A dominant autoinflammatory disease caused by non-cleavable variants of RIPK1.</title>
        <authorList>
            <person name="Tao P."/>
            <person name="Sun J."/>
            <person name="Wu Z."/>
            <person name="Wang S."/>
            <person name="Wang J."/>
            <person name="Li W."/>
            <person name="Pan H."/>
            <person name="Bai R."/>
            <person name="Zhang J."/>
            <person name="Wang Y."/>
            <person name="Lee P.Y."/>
            <person name="Ying W."/>
            <person name="Zhou Q."/>
            <person name="Hou J."/>
            <person name="Wang W."/>
            <person name="Sun B."/>
            <person name="Yang M."/>
            <person name="Liu D."/>
            <person name="Fang R."/>
            <person name="Han H."/>
            <person name="Yang Z."/>
            <person name="Huang X."/>
            <person name="Li H."/>
            <person name="Deuitch N."/>
            <person name="Zhang Y."/>
            <person name="Dissanayake D."/>
            <person name="Haude K."/>
            <person name="McWalter K."/>
            <person name="Roadhouse C."/>
            <person name="MacKenzie J.J."/>
            <person name="Laxer R.M."/>
            <person name="Aksentijevich I."/>
            <person name="Yu X."/>
            <person name="Wang X."/>
            <person name="Yuan J."/>
            <person name="Zhou Q."/>
        </authorList>
    </citation>
    <scope>FUNCTION</scope>
</reference>
<reference key="39">
    <citation type="journal article" date="2020" name="Nat. Cell Biol.">
        <title>PD-L1-mediated gasdermin C expression switches apoptosis to pyroptosis in cancer cells and facilitates tumour necrosis.</title>
        <authorList>
            <person name="Hou J."/>
            <person name="Zhao R."/>
            <person name="Xia W."/>
            <person name="Chang C.W."/>
            <person name="You Y."/>
            <person name="Hsu J.M."/>
            <person name="Nie L."/>
            <person name="Chen Y."/>
            <person name="Wang Y.C."/>
            <person name="Liu C."/>
            <person name="Wang W.J."/>
            <person name="Wu Y."/>
            <person name="Ke B."/>
            <person name="Hsu J.L."/>
            <person name="Huang K."/>
            <person name="Ye Z."/>
            <person name="Yang Y."/>
            <person name="Xia X."/>
            <person name="Li Y."/>
            <person name="Li C.W."/>
            <person name="Shao B."/>
            <person name="Tainer J.A."/>
            <person name="Hung M.C."/>
        </authorList>
    </citation>
    <scope>FUNCTION</scope>
    <scope>CATALYTIC ACTIVITY</scope>
</reference>
<reference key="40">
    <citation type="journal article" date="2021" name="Cell Res.">
        <title>The metabolite alpha-KG induces GSDMC-dependent pyroptosis through death receptor 6-activated caspase-8.</title>
        <authorList>
            <person name="Zhang J.Y."/>
            <person name="Zhou B."/>
            <person name="Sun R.Y."/>
            <person name="Ai Y.L."/>
            <person name="Cheng K."/>
            <person name="Li F.N."/>
            <person name="Wang B.R."/>
            <person name="Liu F.J."/>
            <person name="Jiang Z.H."/>
            <person name="Wang W.J."/>
            <person name="Zhou D."/>
            <person name="Chen H.Z."/>
            <person name="Wu Q."/>
        </authorList>
    </citation>
    <scope>FUNCTION</scope>
    <scope>CATALYTIC ACTIVITY</scope>
</reference>
<reference key="41">
    <citation type="journal article" date="2022" name="MBio">
        <title>Calmodulin binding activates chromobacterium CopC effector to ADP-riboxanate host apoptotic caspases.</title>
        <authorList>
            <person name="Liu Y."/>
            <person name="Zeng H."/>
            <person name="Hou Y."/>
            <person name="Li Z."/>
            <person name="Li L."/>
            <person name="Song X."/>
            <person name="Ding J."/>
            <person name="Shao F."/>
            <person name="Xu Y."/>
        </authorList>
    </citation>
    <scope>FUNCTION</scope>
    <scope>ADP-RIBOXANATION AT ARG-413 (MICROBIAL INFECTION)</scope>
    <scope>MUTAGENESIS OF ARG-413</scope>
</reference>
<reference key="42">
    <citation type="journal article" date="2022" name="Mol. Cell">
        <title>Pathogen hijacks programmed cell death signaling by arginine ADPR-deacylization of caspases.</title>
        <authorList>
            <person name="Peng T."/>
            <person name="Tao X."/>
            <person name="Xia Z."/>
            <person name="Hu S."/>
            <person name="Xue J."/>
            <person name="Zhu Q."/>
            <person name="Pan X."/>
            <person name="Zhang Q."/>
            <person name="Li S."/>
        </authorList>
    </citation>
    <scope>FUNCTION</scope>
    <scope>ADP-RIBOXANATION AT ARG-413 (MICROBIAL INFECTION)</scope>
</reference>
<reference key="43">
    <citation type="journal article" date="1999" name="Structure">
        <title>The three-dimensional structure of caspase-8: an initiator enzyme in apoptosis.</title>
        <authorList>
            <person name="Blanchard H."/>
            <person name="Kodandapani L."/>
            <person name="Mittl P.R.E."/>
            <person name="Di Marco S."/>
            <person name="Krebs J.F."/>
            <person name="Wu J.C."/>
            <person name="Tomaselli K.J."/>
            <person name="Gruetter M.G."/>
        </authorList>
    </citation>
    <scope>X-RAY CRYSTALLOGRAPHY (2.8 ANGSTROMS)</scope>
</reference>
<reference key="44">
    <citation type="journal article" date="1999" name="Structure">
        <title>The atomic-resolution structure of human caspase-8, a key activator of apoptosis.</title>
        <authorList>
            <person name="Watt W."/>
            <person name="Koeplinger K.A."/>
            <person name="Mildner A.M."/>
            <person name="Heinrikson R.L."/>
            <person name="Tomasselli A.G."/>
            <person name="Watenpaugh K.D."/>
        </authorList>
    </citation>
    <scope>X-RAY CRYSTALLOGRAPHY (1.2 ANGSTROMS) OF 211-479</scope>
    <scope>SUBUNIT</scope>
    <scope>ACTIVE SITE</scope>
</reference>
<reference key="45">
    <citation type="journal article" date="2002" name="Nature">
        <title>Pleiotropic defects in lymphocyte activation caused by caspase-8 mutations lead to human immunodeficiency.</title>
        <authorList>
            <person name="Chun H.J."/>
            <person name="Zheng L."/>
            <person name="Ahmad M."/>
            <person name="Wang J."/>
            <person name="Speirs C.K."/>
            <person name="Siegel R.M."/>
            <person name="Dale J.K."/>
            <person name="Puck J."/>
            <person name="Davis J."/>
            <person name="Hall C.G."/>
            <person name="Skoda-Smith S."/>
            <person name="Atkinson T.P."/>
            <person name="Straus S.E."/>
            <person name="Lenardo M.J."/>
        </authorList>
    </citation>
    <scope>VARIANT CASP8D TRP-248</scope>
</reference>
<reference key="46">
    <citation type="journal article" date="2004" name="J. Natl. Cancer Inst.">
        <title>Association of a common variant of the CASP8 gene with reduced risk of breast cancer.</title>
        <authorList>
            <person name="MacPherson G."/>
            <person name="Healey C.S."/>
            <person name="Teare M.D."/>
            <person name="Balasubramanian S.P."/>
            <person name="Reed M.W.R."/>
            <person name="Pharoah P.D."/>
            <person name="Ponder B.A.J."/>
            <person name="Meuth M."/>
            <person name="Bhattacharyya N.P."/>
            <person name="Cox A."/>
        </authorList>
    </citation>
    <scope>VARIANT HIS-285</scope>
    <scope>PROTECTION AGAINST BREAST CANCER</scope>
</reference>
<reference key="47">
    <citation type="journal article" date="2007" name="Nat. Genet.">
        <title>A common coding variant in CASP8 is associated with breast cancer risk.</title>
        <authorList>
            <consortium name="The Kathleen Cunningham foundation consortium for research into familial breast cancer"/>
            <consortium name="Breast cancer association consortium"/>
            <person name="Cox A."/>
            <person name="Dunning A.M."/>
            <person name="Garcia-Closas M."/>
            <person name="Balasubramanian S."/>
            <person name="Reed M.W.R."/>
            <person name="Pooley K.A."/>
            <person name="Scollen S."/>
            <person name="Baynes C."/>
            <person name="Ponder B.A.J."/>
            <person name="Chanock S."/>
            <person name="Lissowska J."/>
            <person name="Brinton L."/>
            <person name="Peplonska B."/>
            <person name="Southey M.C."/>
            <person name="Hopper J.L."/>
            <person name="McCredie M.R.E."/>
            <person name="Giles G.G."/>
            <person name="Fletcher O."/>
            <person name="Johnson N."/>
            <person name="dos Santos Silva I."/>
            <person name="Gibson L."/>
            <person name="Bojesen S.E."/>
            <person name="Nordestgaard B.G."/>
            <person name="Axelsson C.K."/>
            <person name="Torres D."/>
            <person name="Hamann U."/>
            <person name="Justenhoven C."/>
            <person name="Brauch H."/>
            <person name="Chang-Claude J."/>
            <person name="Kropp S."/>
            <person name="Risch A."/>
            <person name="Wang-Gohrke S."/>
            <person name="Schuermann P."/>
            <person name="Bogdanova N."/>
            <person name="Doerk T."/>
            <person name="Fagerholm R."/>
            <person name="Aaltonen K."/>
            <person name="Blomqvist C."/>
            <person name="Nevanlinna H."/>
            <person name="Seal S."/>
            <person name="Renwick A."/>
            <person name="Stratton M.R."/>
            <person name="Rahman N."/>
            <person name="Sangrajrang S."/>
            <person name="Hughes D."/>
            <person name="Odefrey F."/>
            <person name="Brennan P."/>
            <person name="Spurdle A.B."/>
            <person name="Chenevix-Trench G."/>
            <person name="Beesley J."/>
            <person name="Mannermaa A."/>
            <person name="Hartikainen J."/>
            <person name="Kataja V."/>
            <person name="Kosma V.M."/>
            <person name="Couch F.J."/>
            <person name="Olson J.E."/>
            <person name="Goode E.L."/>
            <person name="Broeks A."/>
            <person name="Schmidt M.K."/>
            <person name="Hogervorst F.B.L."/>
            <person name="Van't Veer L.J."/>
            <person name="Kang D."/>
            <person name="Yoo K.-Y."/>
            <person name="Noh D.-Y."/>
            <person name="Ahn S.-H."/>
            <person name="Wedren S."/>
            <person name="Hall P."/>
            <person name="Low Y.-L."/>
            <person name="Liu J."/>
            <person name="Milne R.L."/>
            <person name="Ribas G."/>
            <person name="Gonzalez-Neira A."/>
            <person name="Benitez J."/>
            <person name="Sigurdson A.J."/>
            <person name="Stredrick D.L."/>
            <person name="Alexander B.H."/>
            <person name="Struewing J.P."/>
            <person name="Pharoah P.D.P."/>
            <person name="Easton D.F."/>
        </authorList>
    </citation>
    <scope>VARIANT HIS-285</scope>
    <scope>PROTECTION AGAINST BREAST CANCER</scope>
</reference>
<reference key="48">
    <citation type="journal article" date="2007" name="Nat. Genet.">
        <authorList>
            <consortium name="The Kathleen Cunningham foundation consortium for research into familial breast cancer"/>
            <consortium name="Breast cancer association consortium"/>
            <person name="Cox A."/>
            <person name="Dunning A.M."/>
            <person name="Garcia-Closas M."/>
            <person name="Balasubramanian S."/>
            <person name="Reed M.W.R."/>
            <person name="Pooley K.A."/>
            <person name="Scollen S."/>
            <person name="Baynes C."/>
            <person name="Ponder B.A.J."/>
            <person name="Chanock S."/>
            <person name="Lissowska J."/>
            <person name="Brinton L."/>
            <person name="Peplonska B."/>
            <person name="Southey M.C."/>
            <person name="Hopper J.L."/>
            <person name="McCredie M.R.E."/>
            <person name="Giles G.G."/>
            <person name="Fletcher O."/>
            <person name="Johnson N."/>
            <person name="dos Santos Silva I."/>
            <person name="Gibson L."/>
            <person name="Bojesen S.E."/>
            <person name="Nordestgaard B.G."/>
            <person name="Axelsson C.K."/>
            <person name="Torres D."/>
            <person name="Hamann U."/>
            <person name="Justenhoven C."/>
            <person name="Brauch H."/>
            <person name="Chang-Claude J."/>
            <person name="Kropp S."/>
            <person name="Risch A."/>
            <person name="Wang-Gohrke S."/>
            <person name="Schuermann P."/>
            <person name="Bogdanova N."/>
            <person name="Doerk T."/>
            <person name="Fagerholm R."/>
            <person name="Aaltonen K."/>
            <person name="Blomqvist C."/>
            <person name="Nevanlinna H."/>
            <person name="Seal S."/>
            <person name="Renwick A."/>
            <person name="Stratton M.R."/>
            <person name="Rahman N."/>
            <person name="Sangrajrang S."/>
            <person name="Hughes D."/>
            <person name="Odefrey F."/>
            <person name="Brennan P."/>
            <person name="Spurdle A.B."/>
            <person name="Chenevix-Trench G."/>
            <person name="Beesley J."/>
            <person name="Mannermaa A."/>
            <person name="Hartikainen J."/>
            <person name="Kataja V."/>
            <person name="Kosma V.M."/>
            <person name="Couch F.J."/>
            <person name="Olson J.E."/>
            <person name="Goode E.L."/>
            <person name="Broeks A."/>
            <person name="Schmidt M.K."/>
            <person name="Hogervorst F.B.L."/>
            <person name="Van't Veer L.J."/>
            <person name="Kang D."/>
            <person name="Yoo K.-Y."/>
            <person name="Noh D.-Y."/>
            <person name="Ahn S.-H."/>
            <person name="Wedren S."/>
            <person name="Hall P."/>
            <person name="Low Y.-L."/>
            <person name="Liu J."/>
            <person name="Milne R.L."/>
            <person name="Ribas G."/>
            <person name="Gonzalez-Neira A."/>
            <person name="Benitez J."/>
            <person name="Sigurdson A.J."/>
            <person name="Stredrick D.L."/>
            <person name="Alexander B.H."/>
            <person name="Struewing J.P."/>
            <person name="Pharoah P.D.P."/>
            <person name="Easton D.F."/>
        </authorList>
    </citation>
    <scope>ERRATUM OF PUBMED:17293864</scope>
</reference>
<reference key="49">
    <citation type="journal article" date="2007" name="Nat. Genet.">
        <title>A six-nucleotide insertion-deletion polymorphism in the CASP8 promoter is associated with susceptibility to multiple cancers.</title>
        <authorList>
            <person name="Sun T."/>
            <person name="Gao Y."/>
            <person name="Tan W."/>
            <person name="Ma S."/>
            <person name="Shi Y."/>
            <person name="Yao J."/>
            <person name="Guo Y."/>
            <person name="Yang M."/>
            <person name="Zhang X."/>
            <person name="Zhang Q."/>
            <person name="Zeng C."/>
            <person name="Lin D."/>
        </authorList>
    </citation>
    <scope>INVOLVEMENT IN PROTECTION AGAINST LUNG CANCER</scope>
</reference>
<reference key="50">
    <citation type="journal article" date="2008" name="Hum. Mutat.">
        <title>Genetic variants and haplotypes of the caspase-8 and caspase-10 genes contribute to susceptibility to cutaneous melanoma.</title>
        <authorList>
            <person name="Li C."/>
            <person name="Zhao H."/>
            <person name="Hu Z."/>
            <person name="Liu Z."/>
            <person name="Wang L.-E."/>
            <person name="Gershenwald J.E."/>
            <person name="Prieto V.G."/>
            <person name="Lee J.E."/>
            <person name="Duvic M."/>
            <person name="Grimm E.A."/>
            <person name="Wei Q."/>
        </authorList>
    </citation>
    <scope>VARIANT HIS-285</scope>
    <scope>RISK FACTOR FOR CUTANEOUS MELANOMA</scope>
</reference>
<accession>Q14790</accession>
<accession>O14676</accession>
<accession>Q14791</accession>
<accession>Q14792</accession>
<accession>Q14793</accession>
<accession>Q14794</accession>
<accession>Q14795</accession>
<accession>Q14796</accession>
<accession>Q15780</accession>
<accession>Q15806</accession>
<accession>Q53TT5</accession>
<accession>Q8TDI1</accession>
<accession>Q8TDI2</accession>
<accession>Q8TDI3</accession>
<accession>Q8TDI4</accession>
<accession>Q8TDI5</accession>
<accession>Q96T22</accession>
<accession>Q9C0K4</accession>
<accession>Q9UQ81</accession>
<gene>
    <name evidence="53 56" type="primary">CASP8</name>
    <name evidence="51" type="synonym">MCH5</name>
</gene>
<proteinExistence type="evidence at protein level"/>
<sequence length="479" mass="55391">MDFSRNLYDIGEQLDSEDLASLKFLSLDYIPQRKQEPIKDALMLFQRLQEKRMLEESNLSFLKELLFRINRLDLLITYLNTRKEEMERELQTPGRAQISAYRVMLYQISEEVSRSELRSFKFLLQEEISKCKLDDDMNLLDIFIEMEKRVILGEGKLDILKRVCAQINKSLLKIINDYEEFSKERSSSLEGSPDEFSNGEELCGVMTISDSPREQDSESQTLDKVYQMKSKPRGYCLIINNHNFAKAREKVPKLHSIRDRNGTHLDAGALTTTFEELHFEIKPHDDCTVEQIYEILKIYQLMDHSNMDCFICCILSHGDKGIIYGTDGQEAPIYELTSQFTGLKCPSLAGKPKVFFIQACQGDNYQKGIPVETDSEEQPYLEMDLSSPQTRYIPDEADFLLGMATVNNCVSYRNPAEGTWYIQSLCQSLRERCPRGDDILTILTEVNYEVSNKDDKKNMGKQMPQPTFTLRKKLVFPSD</sequence>
<organism>
    <name type="scientific">Homo sapiens</name>
    <name type="common">Human</name>
    <dbReference type="NCBI Taxonomy" id="9606"/>
    <lineage>
        <taxon>Eukaryota</taxon>
        <taxon>Metazoa</taxon>
        <taxon>Chordata</taxon>
        <taxon>Craniata</taxon>
        <taxon>Vertebrata</taxon>
        <taxon>Euteleostomi</taxon>
        <taxon>Mammalia</taxon>
        <taxon>Eutheria</taxon>
        <taxon>Euarchontoglires</taxon>
        <taxon>Primates</taxon>
        <taxon>Haplorrhini</taxon>
        <taxon>Catarrhini</taxon>
        <taxon>Hominidae</taxon>
        <taxon>Homo</taxon>
    </lineage>
</organism>